<sequence length="375" mass="41737">MDDDIAALVVDNGSGMCKAGFAGDDAPRAVFPSIVGRPRHQGVMVGMGQKDSYVGDEAQSKRGILTLKYPIEHGIVTNWDDMEKIWHHTFYNELRVAPEEHPVLLTEAPLNPKANREKMTQIMFETFNTPAMYVAIQAVLSLYASGRTTGIVMDSGDGVTHTVPIYEGYALPHAILRLDLAGRDLTDYLMKILTERGYSFTTTAEREIVRDIKEKLCYVALDFEQEMATAASSSSLEKSYELPDGQVITIGNERFRCPEALFQPSFLGMESCGIHETTFNSIMKCDVDIRKDLYANTVLSGGTTMYPGIADRMQKEITALAPSTMKIKIIAPPERKYSVWIGGSILASLSTFQQMWISKQEYDESGPSIVHRKCF</sequence>
<proteinExistence type="evidence at protein level"/>
<gene>
    <name type="primary">ACTB</name>
</gene>
<keyword id="KW-0002">3D-structure</keyword>
<keyword id="KW-0007">Acetylation</keyword>
<keyword id="KW-0067">ATP-binding</keyword>
<keyword id="KW-0963">Cytoplasm</keyword>
<keyword id="KW-0206">Cytoskeleton</keyword>
<keyword id="KW-0209">Deafness</keyword>
<keyword id="KW-0903">Direct protein sequencing</keyword>
<keyword id="KW-0225">Disease variant</keyword>
<keyword id="KW-1023">Dystonia</keyword>
<keyword id="KW-0378">Hydrolase</keyword>
<keyword id="KW-0991">Intellectual disability</keyword>
<keyword id="KW-1017">Isopeptide bond</keyword>
<keyword id="KW-0488">Methylation</keyword>
<keyword id="KW-0547">Nucleotide-binding</keyword>
<keyword id="KW-0539">Nucleus</keyword>
<keyword id="KW-0558">Oxidation</keyword>
<keyword id="KW-1267">Proteomics identification</keyword>
<keyword id="KW-1185">Reference proteome</keyword>
<keyword id="KW-0832">Ubl conjugation</keyword>
<evidence type="ECO:0000250" key="1">
    <source>
        <dbReference type="UniProtKB" id="O18840"/>
    </source>
</evidence>
<evidence type="ECO:0000250" key="2">
    <source>
        <dbReference type="UniProtKB" id="P60710"/>
    </source>
</evidence>
<evidence type="ECO:0000250" key="3">
    <source>
        <dbReference type="UniProtKB" id="P68137"/>
    </source>
</evidence>
<evidence type="ECO:0000250" key="4">
    <source>
        <dbReference type="UniProtKB" id="Q6QAQ1"/>
    </source>
</evidence>
<evidence type="ECO:0000269" key="5">
    <source>
    </source>
</evidence>
<evidence type="ECO:0000269" key="6">
    <source>
    </source>
</evidence>
<evidence type="ECO:0000269" key="7">
    <source>
    </source>
</evidence>
<evidence type="ECO:0000269" key="8">
    <source>
    </source>
</evidence>
<evidence type="ECO:0000269" key="9">
    <source>
    </source>
</evidence>
<evidence type="ECO:0000269" key="10">
    <source>
    </source>
</evidence>
<evidence type="ECO:0000269" key="11">
    <source>
    </source>
</evidence>
<evidence type="ECO:0000269" key="12">
    <source>
    </source>
</evidence>
<evidence type="ECO:0000269" key="13">
    <source>
    </source>
</evidence>
<evidence type="ECO:0000269" key="14">
    <source>
    </source>
</evidence>
<evidence type="ECO:0000269" key="15">
    <source>
    </source>
</evidence>
<evidence type="ECO:0000269" key="16">
    <source>
    </source>
</evidence>
<evidence type="ECO:0000269" key="17">
    <source>
    </source>
</evidence>
<evidence type="ECO:0000269" key="18">
    <source>
    </source>
</evidence>
<evidence type="ECO:0000269" key="19">
    <source>
    </source>
</evidence>
<evidence type="ECO:0000269" key="20">
    <source>
    </source>
</evidence>
<evidence type="ECO:0000269" key="21">
    <source>
    </source>
</evidence>
<evidence type="ECO:0000269" key="22">
    <source>
    </source>
</evidence>
<evidence type="ECO:0000269" key="23">
    <source>
    </source>
</evidence>
<evidence type="ECO:0000269" key="24">
    <source>
    </source>
</evidence>
<evidence type="ECO:0000269" key="25">
    <source>
    </source>
</evidence>
<evidence type="ECO:0000269" key="26">
    <source>
    </source>
</evidence>
<evidence type="ECO:0000269" key="27">
    <source>
    </source>
</evidence>
<evidence type="ECO:0000269" key="28">
    <source>
    </source>
</evidence>
<evidence type="ECO:0000269" key="29">
    <source>
    </source>
</evidence>
<evidence type="ECO:0000269" key="30">
    <source>
    </source>
</evidence>
<evidence type="ECO:0000269" key="31">
    <source>
    </source>
</evidence>
<evidence type="ECO:0000269" key="32">
    <source>
    </source>
</evidence>
<evidence type="ECO:0000269" key="33">
    <source>
    </source>
</evidence>
<evidence type="ECO:0000269" key="34">
    <source>
    </source>
</evidence>
<evidence type="ECO:0000269" key="35">
    <source>
    </source>
</evidence>
<evidence type="ECO:0000269" key="36">
    <source>
    </source>
</evidence>
<evidence type="ECO:0000269" key="37">
    <source>
    </source>
</evidence>
<evidence type="ECO:0000269" key="38">
    <source>
    </source>
</evidence>
<evidence type="ECO:0000269" key="39">
    <source>
    </source>
</evidence>
<evidence type="ECO:0000269" key="40">
    <source>
    </source>
</evidence>
<evidence type="ECO:0000269" key="41">
    <source>
    </source>
</evidence>
<evidence type="ECO:0000269" key="42">
    <source ref="8"/>
</evidence>
<evidence type="ECO:0000305" key="43"/>
<evidence type="ECO:0000305" key="44">
    <source>
    </source>
</evidence>
<evidence type="ECO:0000305" key="45">
    <source>
    </source>
</evidence>
<evidence type="ECO:0000305" key="46">
    <source>
    </source>
</evidence>
<evidence type="ECO:0007744" key="47">
    <source>
        <dbReference type="PDB" id="6OX0"/>
    </source>
</evidence>
<evidence type="ECO:0007744" key="48">
    <source>
        <dbReference type="PDB" id="6OX1"/>
    </source>
</evidence>
<evidence type="ECO:0007744" key="49">
    <source>
        <dbReference type="PDB" id="6OX2"/>
    </source>
</evidence>
<evidence type="ECO:0007744" key="50">
    <source>
        <dbReference type="PDB" id="6OX3"/>
    </source>
</evidence>
<evidence type="ECO:0007744" key="51">
    <source>
        <dbReference type="PDB" id="6OX4"/>
    </source>
</evidence>
<evidence type="ECO:0007744" key="52">
    <source>
        <dbReference type="PDB" id="6OX5"/>
    </source>
</evidence>
<evidence type="ECO:0007744" key="53">
    <source>
        <dbReference type="PDB" id="6V62"/>
    </source>
</evidence>
<evidence type="ECO:0007744" key="54">
    <source>
        <dbReference type="PDB" id="6V63"/>
    </source>
</evidence>
<evidence type="ECO:0007744" key="55">
    <source>
        <dbReference type="PDB" id="6WK1"/>
    </source>
</evidence>
<evidence type="ECO:0007744" key="56">
    <source>
        <dbReference type="PDB" id="6WK2"/>
    </source>
</evidence>
<evidence type="ECO:0007744" key="57">
    <source>
        <dbReference type="PDB" id="8RX1"/>
    </source>
</evidence>
<evidence type="ECO:0007744" key="58">
    <source>
        <dbReference type="PDB" id="8VRD"/>
    </source>
</evidence>
<evidence type="ECO:0007744" key="59">
    <source>
        <dbReference type="PDB" id="8VRJ"/>
    </source>
</evidence>
<evidence type="ECO:0007744" key="60">
    <source>
        <dbReference type="PDB" id="8VRK"/>
    </source>
</evidence>
<evidence type="ECO:0007744" key="61">
    <source>
    </source>
</evidence>
<evidence type="ECO:0007744" key="62">
    <source>
    </source>
</evidence>
<evidence type="ECO:0007744" key="63">
    <source>
    </source>
</evidence>
<evidence type="ECO:0007744" key="64">
    <source>
    </source>
</evidence>
<evidence type="ECO:0007829" key="65">
    <source>
        <dbReference type="PDB" id="6MBK"/>
    </source>
</evidence>
<evidence type="ECO:0007829" key="66">
    <source>
        <dbReference type="PDB" id="6OX3"/>
    </source>
</evidence>
<evidence type="ECO:0007829" key="67">
    <source>
        <dbReference type="PDB" id="7VDV"/>
    </source>
</evidence>
<evidence type="ECO:0007829" key="68">
    <source>
        <dbReference type="PDB" id="8COG"/>
    </source>
</evidence>
<evidence type="ECO:0007829" key="69">
    <source>
        <dbReference type="PDB" id="8DNH"/>
    </source>
</evidence>
<evidence type="ECO:0007829" key="70">
    <source>
        <dbReference type="PDB" id="8OI8"/>
    </source>
</evidence>
<evidence type="ECO:0007829" key="71">
    <source>
        <dbReference type="PDB" id="8OID"/>
    </source>
</evidence>
<evidence type="ECO:0007829" key="72">
    <source>
        <dbReference type="PDB" id="8RU2"/>
    </source>
</evidence>
<evidence type="ECO:0007829" key="73">
    <source>
        <dbReference type="PDB" id="8XVT"/>
    </source>
</evidence>
<organism>
    <name type="scientific">Homo sapiens</name>
    <name type="common">Human</name>
    <dbReference type="NCBI Taxonomy" id="9606"/>
    <lineage>
        <taxon>Eukaryota</taxon>
        <taxon>Metazoa</taxon>
        <taxon>Chordata</taxon>
        <taxon>Craniata</taxon>
        <taxon>Vertebrata</taxon>
        <taxon>Euteleostomi</taxon>
        <taxon>Mammalia</taxon>
        <taxon>Eutheria</taxon>
        <taxon>Euarchontoglires</taxon>
        <taxon>Primates</taxon>
        <taxon>Haplorrhini</taxon>
        <taxon>Catarrhini</taxon>
        <taxon>Hominidae</taxon>
        <taxon>Homo</taxon>
    </lineage>
</organism>
<dbReference type="EC" id="3.6.4.-" evidence="3"/>
<dbReference type="EMBL" id="X00351">
    <property type="protein sequence ID" value="CAA25099.1"/>
    <property type="molecule type" value="mRNA"/>
</dbReference>
<dbReference type="EMBL" id="M10277">
    <property type="protein sequence ID" value="AAA51567.1"/>
    <property type="molecule type" value="Genomic_DNA"/>
</dbReference>
<dbReference type="EMBL" id="X63432">
    <property type="protein sequence ID" value="CAA45026.1"/>
    <property type="molecule type" value="mRNA"/>
</dbReference>
<dbReference type="EMBL" id="AY582799">
    <property type="protein sequence ID" value="AAS79319.1"/>
    <property type="molecule type" value="Genomic_DNA"/>
</dbReference>
<dbReference type="EMBL" id="AC006483">
    <property type="protein sequence ID" value="AAP22343.1"/>
    <property type="molecule type" value="Genomic_DNA"/>
</dbReference>
<dbReference type="EMBL" id="BC001301">
    <property type="protein sequence ID" value="AAH01301.1"/>
    <property type="molecule type" value="mRNA"/>
</dbReference>
<dbReference type="EMBL" id="BC002409">
    <property type="protein sequence ID" value="AAH02409.1"/>
    <property type="molecule type" value="mRNA"/>
</dbReference>
<dbReference type="EMBL" id="BC004251">
    <property type="protein sequence ID" value="AAH04251.1"/>
    <property type="molecule type" value="mRNA"/>
</dbReference>
<dbReference type="EMBL" id="BC008633">
    <property type="protein sequence ID" value="AAH08633.1"/>
    <property type="molecule type" value="mRNA"/>
</dbReference>
<dbReference type="EMBL" id="BC012854">
    <property type="protein sequence ID" value="AAH12854.1"/>
    <property type="molecule type" value="mRNA"/>
</dbReference>
<dbReference type="EMBL" id="BC013380">
    <property type="protein sequence ID" value="AAH13380.1"/>
    <property type="molecule type" value="mRNA"/>
</dbReference>
<dbReference type="EMBL" id="BC014861">
    <property type="protein sequence ID" value="AAH14861.1"/>
    <property type="molecule type" value="mRNA"/>
</dbReference>
<dbReference type="EMBL" id="BC016045">
    <property type="protein sequence ID" value="AAH16045.1"/>
    <property type="molecule type" value="mRNA"/>
</dbReference>
<dbReference type="EMBL" id="V00478">
    <property type="protein sequence ID" value="CAA23745.1"/>
    <property type="molecule type" value="mRNA"/>
</dbReference>
<dbReference type="CCDS" id="CCDS5341.1"/>
<dbReference type="PIR" id="A25168">
    <property type="entry name" value="ATHUB"/>
</dbReference>
<dbReference type="RefSeq" id="NP_001092.1">
    <property type="nucleotide sequence ID" value="NM_001101.5"/>
</dbReference>
<dbReference type="PDB" id="3BYH">
    <property type="method" value="EM"/>
    <property type="resolution" value="12.00 A"/>
    <property type="chains" value="A=2-375"/>
</dbReference>
<dbReference type="PDB" id="3D2U">
    <property type="method" value="X-ray"/>
    <property type="resolution" value="2.21 A"/>
    <property type="chains" value="C/G=170-178"/>
</dbReference>
<dbReference type="PDB" id="3J82">
    <property type="method" value="EM"/>
    <property type="resolution" value="7.70 A"/>
    <property type="chains" value="B/C/D=2-375"/>
</dbReference>
<dbReference type="PDB" id="3LUE">
    <property type="method" value="EM"/>
    <property type="chains" value="A/B/C/D/E/F/G/H/I/J=2-375"/>
</dbReference>
<dbReference type="PDB" id="6ANU">
    <property type="method" value="EM"/>
    <property type="resolution" value="7.00 A"/>
    <property type="chains" value="A/B/C/D/E/F=1-375"/>
</dbReference>
<dbReference type="PDB" id="6ICT">
    <property type="method" value="X-ray"/>
    <property type="resolution" value="1.95 A"/>
    <property type="chains" value="E/G/H/I=66-88"/>
</dbReference>
<dbReference type="PDB" id="6ICV">
    <property type="method" value="X-ray"/>
    <property type="resolution" value="2.15 A"/>
    <property type="chains" value="C/D=66-88"/>
</dbReference>
<dbReference type="PDB" id="6LTJ">
    <property type="method" value="EM"/>
    <property type="resolution" value="3.70 A"/>
    <property type="chains" value="K=1-375"/>
</dbReference>
<dbReference type="PDB" id="6MBJ">
    <property type="method" value="X-ray"/>
    <property type="resolution" value="1.78 A"/>
    <property type="chains" value="Y/Z=66-80"/>
</dbReference>
<dbReference type="PDB" id="6MBK">
    <property type="method" value="X-ray"/>
    <property type="resolution" value="1.69 A"/>
    <property type="chains" value="Y/Z=66-80"/>
</dbReference>
<dbReference type="PDB" id="6MBL">
    <property type="method" value="X-ray"/>
    <property type="resolution" value="2.20 A"/>
    <property type="chains" value="Y=66-80"/>
</dbReference>
<dbReference type="PDB" id="6NBW">
    <property type="method" value="X-ray"/>
    <property type="resolution" value="2.50 A"/>
    <property type="chains" value="A=2-375"/>
</dbReference>
<dbReference type="PDB" id="6OX0">
    <property type="method" value="X-ray"/>
    <property type="resolution" value="1.75 A"/>
    <property type="chains" value="Y/Z=66-80"/>
</dbReference>
<dbReference type="PDB" id="6OX1">
    <property type="method" value="X-ray"/>
    <property type="resolution" value="1.95 A"/>
    <property type="chains" value="Y/Z=66-80"/>
</dbReference>
<dbReference type="PDB" id="6OX2">
    <property type="method" value="X-ray"/>
    <property type="resolution" value="2.09 A"/>
    <property type="chains" value="Y/Z=66-80"/>
</dbReference>
<dbReference type="PDB" id="6OX3">
    <property type="method" value="X-ray"/>
    <property type="resolution" value="1.78 A"/>
    <property type="chains" value="Y/Z=66-84"/>
</dbReference>
<dbReference type="PDB" id="6OX4">
    <property type="method" value="X-ray"/>
    <property type="resolution" value="2.29 A"/>
    <property type="chains" value="Y/Z=66-80"/>
</dbReference>
<dbReference type="PDB" id="6OX5">
    <property type="method" value="X-ray"/>
    <property type="resolution" value="2.10 A"/>
    <property type="chains" value="Y=66-83"/>
</dbReference>
<dbReference type="PDB" id="6V62">
    <property type="method" value="X-ray"/>
    <property type="resolution" value="2.36 A"/>
    <property type="chains" value="Y=66-88"/>
</dbReference>
<dbReference type="PDB" id="6V63">
    <property type="method" value="X-ray"/>
    <property type="resolution" value="2.02 A"/>
    <property type="chains" value="Y/Z=66-88"/>
</dbReference>
<dbReference type="PDB" id="6WK1">
    <property type="method" value="X-ray"/>
    <property type="resolution" value="1.89 A"/>
    <property type="chains" value="Y/Z=66-88"/>
</dbReference>
<dbReference type="PDB" id="6WK2">
    <property type="method" value="X-ray"/>
    <property type="resolution" value="1.76 A"/>
    <property type="chains" value="C/Y=66-88"/>
</dbReference>
<dbReference type="PDB" id="7AS4">
    <property type="method" value="EM"/>
    <property type="resolution" value="4.13 A"/>
    <property type="chains" value="7=2-375"/>
</dbReference>
<dbReference type="PDB" id="7P1H">
    <property type="method" value="EM"/>
    <property type="resolution" value="3.90 A"/>
    <property type="chains" value="B=4-375"/>
</dbReference>
<dbReference type="PDB" id="7QJ6">
    <property type="method" value="EM"/>
    <property type="resolution" value="7.80 A"/>
    <property type="chains" value="e=1-375"/>
</dbReference>
<dbReference type="PDB" id="7QJ9">
    <property type="method" value="EM"/>
    <property type="resolution" value="8.10 A"/>
    <property type="chains" value="e=1-375"/>
</dbReference>
<dbReference type="PDB" id="7VDV">
    <property type="method" value="EM"/>
    <property type="resolution" value="3.40 A"/>
    <property type="chains" value="P=1-375"/>
</dbReference>
<dbReference type="PDB" id="7W28">
    <property type="method" value="X-ray"/>
    <property type="resolution" value="1.79 A"/>
    <property type="chains" value="P=66-81"/>
</dbReference>
<dbReference type="PDB" id="7W29">
    <property type="method" value="X-ray"/>
    <property type="resolution" value="2.90 A"/>
    <property type="chains" value="P=66-81"/>
</dbReference>
<dbReference type="PDB" id="7Y8R">
    <property type="method" value="EM"/>
    <property type="resolution" value="4.40 A"/>
    <property type="chains" value="J=1-375"/>
</dbReference>
<dbReference type="PDB" id="7ZTC">
    <property type="method" value="EM"/>
    <property type="resolution" value="3.90 A"/>
    <property type="chains" value="A/B/C/D/E/F/G/H=1-375"/>
</dbReference>
<dbReference type="PDB" id="7ZTD">
    <property type="method" value="EM"/>
    <property type="resolution" value="4.60 A"/>
    <property type="chains" value="A/B/C/D/E/F/G/H=1-375"/>
</dbReference>
<dbReference type="PDB" id="8COG">
    <property type="method" value="EM"/>
    <property type="resolution" value="3.50 A"/>
    <property type="chains" value="F=2-375"/>
</dbReference>
<dbReference type="PDB" id="8DNH">
    <property type="method" value="EM"/>
    <property type="resolution" value="2.99 A"/>
    <property type="chains" value="A/B/C/D=2-375"/>
</dbReference>
<dbReference type="PDB" id="8IB8">
    <property type="method" value="EM"/>
    <property type="resolution" value="4.42 A"/>
    <property type="chains" value="S=1-375"/>
</dbReference>
<dbReference type="PDB" id="8OI8">
    <property type="method" value="EM"/>
    <property type="resolution" value="2.28 A"/>
    <property type="chains" value="A/B/C/D/E=1-375"/>
</dbReference>
<dbReference type="PDB" id="8OID">
    <property type="method" value="EM"/>
    <property type="resolution" value="2.30 A"/>
    <property type="chains" value="A/B/C/D/E=1-375"/>
</dbReference>
<dbReference type="PDB" id="8QR1">
    <property type="method" value="EM"/>
    <property type="resolution" value="2.40 A"/>
    <property type="chains" value="B/G=1-375"/>
</dbReference>
<dbReference type="PDB" id="8RTT">
    <property type="method" value="EM"/>
    <property type="resolution" value="3.56 A"/>
    <property type="chains" value="A/B/C/D=1-375"/>
</dbReference>
<dbReference type="PDB" id="8RTY">
    <property type="method" value="EM"/>
    <property type="resolution" value="6.25 A"/>
    <property type="chains" value="A/B/C/D=2-375"/>
</dbReference>
<dbReference type="PDB" id="8RU2">
    <property type="method" value="EM"/>
    <property type="resolution" value="3.49 A"/>
    <property type="chains" value="B/C/D=2-375"/>
</dbReference>
<dbReference type="PDB" id="8RX1">
    <property type="method" value="EM"/>
    <property type="resolution" value="3.57 A"/>
    <property type="chains" value="7=2-375"/>
</dbReference>
<dbReference type="PDB" id="8UAU">
    <property type="method" value="EM"/>
    <property type="resolution" value="5.70 A"/>
    <property type="chains" value="S=3-14"/>
</dbReference>
<dbReference type="PDB" id="8VRD">
    <property type="method" value="EM"/>
    <property type="resolution" value="7.00 A"/>
    <property type="chains" value="S=1-375"/>
</dbReference>
<dbReference type="PDB" id="8VRJ">
    <property type="method" value="EM"/>
    <property type="resolution" value="7.70 A"/>
    <property type="chains" value="9=1-375"/>
</dbReference>
<dbReference type="PDB" id="8VRK">
    <property type="method" value="EM"/>
    <property type="resolution" value="8.50 A"/>
    <property type="chains" value="9=1-375"/>
</dbReference>
<dbReference type="PDB" id="8X15">
    <property type="method" value="EM"/>
    <property type="resolution" value="3.20 A"/>
    <property type="chains" value="S/U=1-375"/>
</dbReference>
<dbReference type="PDB" id="8X19">
    <property type="method" value="EM"/>
    <property type="resolution" value="3.20 A"/>
    <property type="chains" value="S/U=1-375"/>
</dbReference>
<dbReference type="PDB" id="8X1C">
    <property type="method" value="EM"/>
    <property type="resolution" value="3.20 A"/>
    <property type="chains" value="S/U=1-375"/>
</dbReference>
<dbReference type="PDB" id="8XVG">
    <property type="method" value="EM"/>
    <property type="resolution" value="9.40 A"/>
    <property type="chains" value="K=1-375"/>
</dbReference>
<dbReference type="PDB" id="8XVT">
    <property type="method" value="EM"/>
    <property type="resolution" value="3.20 A"/>
    <property type="chains" value="K=1-375"/>
</dbReference>
<dbReference type="PDB" id="9B2Z">
    <property type="method" value="EM"/>
    <property type="resolution" value="2.83 A"/>
    <property type="chains" value="B=1-375"/>
</dbReference>
<dbReference type="PDB" id="9C57">
    <property type="method" value="EM"/>
    <property type="resolution" value="2.75 A"/>
    <property type="chains" value="J=1-375"/>
</dbReference>
<dbReference type="PDB" id="9C62">
    <property type="method" value="EM"/>
    <property type="resolution" value="5.28 A"/>
    <property type="chains" value="J=1-375"/>
</dbReference>
<dbReference type="PDB" id="9C6N">
    <property type="method" value="EM"/>
    <property type="resolution" value="3.29 A"/>
    <property type="chains" value="J=1-375"/>
</dbReference>
<dbReference type="PDB" id="9FJM">
    <property type="method" value="EM"/>
    <property type="resolution" value="3.65 A"/>
    <property type="chains" value="A/B/C/D=2-375"/>
</dbReference>
<dbReference type="PDBsum" id="3BYH"/>
<dbReference type="PDBsum" id="3D2U"/>
<dbReference type="PDBsum" id="3J82"/>
<dbReference type="PDBsum" id="3LUE"/>
<dbReference type="PDBsum" id="6ANU"/>
<dbReference type="PDBsum" id="6ICT"/>
<dbReference type="PDBsum" id="6ICV"/>
<dbReference type="PDBsum" id="6LTJ"/>
<dbReference type="PDBsum" id="6MBJ"/>
<dbReference type="PDBsum" id="6MBK"/>
<dbReference type="PDBsum" id="6MBL"/>
<dbReference type="PDBsum" id="6NBW"/>
<dbReference type="PDBsum" id="6OX0"/>
<dbReference type="PDBsum" id="6OX1"/>
<dbReference type="PDBsum" id="6OX2"/>
<dbReference type="PDBsum" id="6OX3"/>
<dbReference type="PDBsum" id="6OX4"/>
<dbReference type="PDBsum" id="6OX5"/>
<dbReference type="PDBsum" id="6V62"/>
<dbReference type="PDBsum" id="6V63"/>
<dbReference type="PDBsum" id="6WK1"/>
<dbReference type="PDBsum" id="6WK2"/>
<dbReference type="PDBsum" id="7AS4"/>
<dbReference type="PDBsum" id="7P1H"/>
<dbReference type="PDBsum" id="7QJ6"/>
<dbReference type="PDBsum" id="7QJ9"/>
<dbReference type="PDBsum" id="7VDV"/>
<dbReference type="PDBsum" id="7W28"/>
<dbReference type="PDBsum" id="7W29"/>
<dbReference type="PDBsum" id="7Y8R"/>
<dbReference type="PDBsum" id="7ZTC"/>
<dbReference type="PDBsum" id="7ZTD"/>
<dbReference type="PDBsum" id="8COG"/>
<dbReference type="PDBsum" id="8DNH"/>
<dbReference type="PDBsum" id="8IB8"/>
<dbReference type="PDBsum" id="8OI8"/>
<dbReference type="PDBsum" id="8OID"/>
<dbReference type="PDBsum" id="8QR1"/>
<dbReference type="PDBsum" id="8RTT"/>
<dbReference type="PDBsum" id="8RTY"/>
<dbReference type="PDBsum" id="8RU2"/>
<dbReference type="PDBsum" id="8RX1"/>
<dbReference type="PDBsum" id="8UAU"/>
<dbReference type="PDBsum" id="8VRD"/>
<dbReference type="PDBsum" id="8VRJ"/>
<dbReference type="PDBsum" id="8VRK"/>
<dbReference type="PDBsum" id="8X15"/>
<dbReference type="PDBsum" id="8X19"/>
<dbReference type="PDBsum" id="8X1C"/>
<dbReference type="PDBsum" id="8XVG"/>
<dbReference type="PDBsum" id="8XVT"/>
<dbReference type="PDBsum" id="9B2Z"/>
<dbReference type="PDBsum" id="9C57"/>
<dbReference type="PDBsum" id="9C62"/>
<dbReference type="PDBsum" id="9C6N"/>
<dbReference type="PDBsum" id="9FJM"/>
<dbReference type="EMDB" id="EMD-0974"/>
<dbReference type="EMDB" id="EMD-11888"/>
<dbReference type="EMDB" id="EMD-13159"/>
<dbReference type="EMDB" id="EMD-16776"/>
<dbReference type="EMDB" id="EMD-16888"/>
<dbReference type="EMDB" id="EMD-16889"/>
<dbReference type="EMDB" id="EMD-18581"/>
<dbReference type="EMDB" id="EMD-18591"/>
<dbReference type="EMDB" id="EMD-18597"/>
<dbReference type="EMDB" id="EMD-18598"/>
<dbReference type="EMDB" id="EMD-18611"/>
<dbReference type="EMDB" id="EMD-18794"/>
<dbReference type="EMDB" id="EMD-19496"/>
<dbReference type="EMDB" id="EMD-19497"/>
<dbReference type="EMDB" id="EMD-19499"/>
<dbReference type="EMDB" id="EMD-19503"/>
<dbReference type="EMDB" id="EMD-27572"/>
<dbReference type="EMDB" id="EMD-31926"/>
<dbReference type="EMDB" id="EMD-37984"/>
<dbReference type="EMDB" id="EMD-37988"/>
<dbReference type="EMDB" id="EMD-37990"/>
<dbReference type="EMDB" id="EMD-38718"/>
<dbReference type="EMDB" id="EMD-43481"/>
<dbReference type="EMDB" id="EMD-43482"/>
<dbReference type="EMDB" id="EMD-43483"/>
<dbReference type="EMDB" id="EMD-44118"/>
<dbReference type="EMDB" id="EMD-45206"/>
<dbReference type="EMDB" id="EMD-45240"/>
<dbReference type="EMDB" id="EMD-45252"/>
<dbReference type="EMDB" id="EMD-50506"/>
<dbReference type="EMDB" id="EMD-8886"/>
<dbReference type="SASBDB" id="P60709"/>
<dbReference type="SMR" id="P60709"/>
<dbReference type="BioGRID" id="106575">
    <property type="interactions" value="1199"/>
</dbReference>
<dbReference type="ComplexPortal" id="CPX-1164">
    <property type="entry name" value="SWI/SNF ATP-dependent chromatin remodeling complex, ACTL6A-ARID1A-SMARCA2 variant"/>
</dbReference>
<dbReference type="ComplexPortal" id="CPX-1194">
    <property type="entry name" value="Muscle cell-specific SWI/SNF ATP-dependent chromatin remodeling complex, ACTL6A-ARID1A-SMARCA2 variant"/>
</dbReference>
<dbReference type="ComplexPortal" id="CPX-1195">
    <property type="entry name" value="Embryonic stem cell-specific SWI/SNF ATP-dependent chromatin remodeling complex"/>
</dbReference>
<dbReference type="ComplexPortal" id="CPX-1196">
    <property type="entry name" value="Polybromo-associated SWI/SNF ATP-dependent chromatin remodeling complex, ACTL6B variant"/>
</dbReference>
<dbReference type="ComplexPortal" id="CPX-1199">
    <property type="entry name" value="Polybromo-associated SWI/SNF ATP-dependent chromatin remodeling complex, ACTL6A variant"/>
</dbReference>
<dbReference type="ComplexPortal" id="CPX-1201">
    <property type="entry name" value="Neural progenitor-specific SWI/SNF ATP-dependent chromatin remodeling complex, ARID1A-SMARCA2 variant"/>
</dbReference>
<dbReference type="ComplexPortal" id="CPX-1202">
    <property type="entry name" value="Neuron-specific SWI/SNF ATP-dependent chromatin remodeling complex, ARID1A-SMARCA2 variant"/>
</dbReference>
<dbReference type="ComplexPortal" id="CPX-1203">
    <property type="entry name" value="Brain-specific SWI/SNF ATP-dependent chromatin remodeling complex, ARID1A-SMARCA2 variant"/>
</dbReference>
<dbReference type="ComplexPortal" id="CPX-1204">
    <property type="entry name" value="SWI/SNF ATP-dependent chromatin remodeling complex, ACTL6A-ARID1A-SMARCA4 variant"/>
</dbReference>
<dbReference type="ComplexPortal" id="CPX-1205">
    <property type="entry name" value="SWI/SNF ATP-dependent chromatin remodeling complex, ACTL6A-ARID1B-SMARCA2 variant"/>
</dbReference>
<dbReference type="ComplexPortal" id="CPX-1206">
    <property type="entry name" value="SWI/SNF ATP-dependent chromatin remodeling complex, ACTL6A-ARID1B-SMARCA4 variant"/>
</dbReference>
<dbReference type="ComplexPortal" id="CPX-1207">
    <property type="entry name" value="SWI/SNF ATP-dependent chromatin remodeling complex, ACTL6B-ARID1A-SMARCA2 variant"/>
</dbReference>
<dbReference type="ComplexPortal" id="CPX-1209">
    <property type="entry name" value="SWI/SNF ATP-dependent chromatin remodeling complex, ACTL6B-ARID1A-SMARCA4 variant"/>
</dbReference>
<dbReference type="ComplexPortal" id="CPX-1210">
    <property type="entry name" value="SWI/SNF ATP-dependent chromatin remodeling complex, ACTL6B-ARID1B-SMARCA2 variant"/>
</dbReference>
<dbReference type="ComplexPortal" id="CPX-1211">
    <property type="entry name" value="SWI/SNF ATP-dependent chromatin remodeling complex, ACTL6B-ARID1B-SMARCA4 variant"/>
</dbReference>
<dbReference type="ComplexPortal" id="CPX-1212">
    <property type="entry name" value="Neural progenitor-specific SWI/SNF ATP-dependent chromatin remodeling complex, ARID1A-SMARCA4 variant"/>
</dbReference>
<dbReference type="ComplexPortal" id="CPX-1213">
    <property type="entry name" value="Neural progenitor-specific SWI/SNF ATP-dependent chromatin remodeling complex, ARID1B-SMARCA2 variant"/>
</dbReference>
<dbReference type="ComplexPortal" id="CPX-1215">
    <property type="entry name" value="Neural progenitor-specific SWI/SNF ATP-dependent chromatin remodeling complex, ARID1B-SMARCA4 variant"/>
</dbReference>
<dbReference type="ComplexPortal" id="CPX-1216">
    <property type="entry name" value="Neuron-specific SWI/SNF ATP-dependent chromatin remodeling complex, ARID1A-SMARCA4 variant"/>
</dbReference>
<dbReference type="ComplexPortal" id="CPX-1217">
    <property type="entry name" value="Neuron-specific SWI/SNF ATP-dependent chromatin remodeling complex, ARID1B-SMARCA2 variant"/>
</dbReference>
<dbReference type="ComplexPortal" id="CPX-1218">
    <property type="entry name" value="Neuron-specific SWI/SNF ATP-dependent chromatin remodeling complex, ARID1B-SMARCA4 variant"/>
</dbReference>
<dbReference type="ComplexPortal" id="CPX-1219">
    <property type="entry name" value="Brain-specific SWI/SNF ATP-dependent chromatin remodeling complex, ARID1A-SMARCA4 variant"/>
</dbReference>
<dbReference type="ComplexPortal" id="CPX-1220">
    <property type="entry name" value="Brain-specific SWI/SNF ATP-dependent chromatin remodeling complex, ARID1B-SMARCA2 variant"/>
</dbReference>
<dbReference type="ComplexPortal" id="CPX-1221">
    <property type="entry name" value="Brain-specific SWI/SNF ATP-dependent chromatin remodeling complex, ARID1B-SMARCA4 variant"/>
</dbReference>
<dbReference type="ComplexPortal" id="CPX-1222">
    <property type="entry name" value="Muscle cell-specific SWI/SNF ATP-dependent chromatin remodeling complex, ACTL6A-ARID1A-SMARCA4 variant"/>
</dbReference>
<dbReference type="ComplexPortal" id="CPX-1223">
    <property type="entry name" value="Muscle cell-specific SWI/SNF ATP-dependent chromatin remodeling complex, ACTL6A-ARID1B-SMARCA2 variant"/>
</dbReference>
<dbReference type="ComplexPortal" id="CPX-1224">
    <property type="entry name" value="Muscle cell-specific SWI/SNF ATP-dependent chromatin remodeling complex, ACTL6A-ARID1B-SMARCA4 variant"/>
</dbReference>
<dbReference type="ComplexPortal" id="CPX-1225">
    <property type="entry name" value="Muscle cell-specific SWI/SNF ATP-dependent chromatin remodeling complex, ACTL6B-ARID1A-SMARCA2 variant"/>
</dbReference>
<dbReference type="ComplexPortal" id="CPX-1226">
    <property type="entry name" value="Muscle cell-specific SWI/SNF ATP-dependent chromatin remodeling complex, ACTL6B-ARID1A-SMARCA4 variant"/>
</dbReference>
<dbReference type="ComplexPortal" id="CPX-1227">
    <property type="entry name" value="Muscle cell-specific SWI/SNF ATP-dependent chromatin remodeling complex, ACTL6B-ARID1B-SMARCA2 variant"/>
</dbReference>
<dbReference type="ComplexPortal" id="CPX-1228">
    <property type="entry name" value="Muscle cell-specific SWI/SNF ATP-dependent chromatin remodeling complex, ACTL6B-ARID1B-SMARCA4 variant"/>
</dbReference>
<dbReference type="ComplexPortal" id="CPX-4084">
    <property type="entry name" value="GBAF (SWI/SNF) ATP-dependent chromatin remodeling complex, ACTL6A-BICRA-SMARCA2 variant"/>
</dbReference>
<dbReference type="ComplexPortal" id="CPX-4203">
    <property type="entry name" value="GBAF (SWI/SNF) ATP-dependent chromatin remodeling complex, ACTL6A-BICRAL-SMARCA2 variant"/>
</dbReference>
<dbReference type="ComplexPortal" id="CPX-4206">
    <property type="entry name" value="GBAF (SWI/SNF) ATP-dependent chromatin remodeling complex, ACTL6A-BICRA-SMARCA4 variant"/>
</dbReference>
<dbReference type="ComplexPortal" id="CPX-4207">
    <property type="entry name" value="GBAF (SWI/SNF) ATP-dependent chromatin remodeling complex, ACTL6A-BICRAL-SMARCA4 variant"/>
</dbReference>
<dbReference type="ComplexPortal" id="CPX-4223">
    <property type="entry name" value="GBAF (SWI/SNF) ATP-dependent chromatin remodeling complex, ACTL6B-BICRA-SMARCA2 variant"/>
</dbReference>
<dbReference type="ComplexPortal" id="CPX-4224">
    <property type="entry name" value="GBAF (SWI/SNF) ATP-dependent chromatin remodeling complex, ACTL6B-BICRAL-SMARCA2 variant"/>
</dbReference>
<dbReference type="ComplexPortal" id="CPX-4225">
    <property type="entry name" value="GBAF (SWI/SNF) ATP-dependent chromatin remodeling complex, ACTL6B-BICRA-SMARCA4 variant"/>
</dbReference>
<dbReference type="ComplexPortal" id="CPX-4226">
    <property type="entry name" value="GBAF (SWI/SNF) ATP-dependent chromatin remodeling complex, ACTL6B-BICRAL-SMARCA4 variant"/>
</dbReference>
<dbReference type="ComplexPortal" id="CPX-978">
    <property type="entry name" value="NuA4 histone acetyltransferase complex"/>
</dbReference>
<dbReference type="CORUM" id="P60709"/>
<dbReference type="DIP" id="DIP-29686N"/>
<dbReference type="FunCoup" id="P60709">
    <property type="interactions" value="2855"/>
</dbReference>
<dbReference type="IntAct" id="P60709">
    <property type="interactions" value="516"/>
</dbReference>
<dbReference type="MINT" id="P60709"/>
<dbReference type="STRING" id="9606.ENSP00000494750"/>
<dbReference type="ChEMBL" id="CHEMBL2062353"/>
<dbReference type="DrugBank" id="DB12695">
    <property type="generic name" value="Phenethyl Isothiocyanate"/>
</dbReference>
<dbReference type="DrugBank" id="DB04216">
    <property type="generic name" value="Quercetin"/>
</dbReference>
<dbReference type="CarbonylDB" id="P60709"/>
<dbReference type="GlyCosmos" id="P60709">
    <property type="glycosylation" value="6 sites, 2 glycans"/>
</dbReference>
<dbReference type="GlyGen" id="P60709">
    <property type="glycosylation" value="8 sites, 1 N-linked glycan (1 site), 2 O-linked glycans (7 sites)"/>
</dbReference>
<dbReference type="iPTMnet" id="P60709"/>
<dbReference type="MetOSite" id="P60709"/>
<dbReference type="PhosphoSitePlus" id="P60709"/>
<dbReference type="SwissPalm" id="P60709"/>
<dbReference type="BioMuta" id="ACTB"/>
<dbReference type="DMDM" id="46397333"/>
<dbReference type="REPRODUCTION-2DPAGE" id="P60709"/>
<dbReference type="jPOST" id="P60709"/>
<dbReference type="MassIVE" id="P60709"/>
<dbReference type="PaxDb" id="9606-ENSP00000349960"/>
<dbReference type="PeptideAtlas" id="P60709"/>
<dbReference type="PRIDE" id="P60709"/>
<dbReference type="ProteomicsDB" id="57224"/>
<dbReference type="Pumba" id="P60709"/>
<dbReference type="TopDownProteomics" id="P60709"/>
<dbReference type="ABCD" id="P60709">
    <property type="antibodies" value="4 sequenced antibodies"/>
</dbReference>
<dbReference type="Antibodypedia" id="3623">
    <property type="antibodies" value="2078 antibodies from 59 providers"/>
</dbReference>
<dbReference type="DNASU" id="60"/>
<dbReference type="Ensembl" id="ENST00000493945.6">
    <property type="protein sequence ID" value="ENSP00000494269.1"/>
    <property type="gene ID" value="ENSG00000075624.17"/>
</dbReference>
<dbReference type="Ensembl" id="ENST00000642480.2">
    <property type="protein sequence ID" value="ENSP00000495995.2"/>
    <property type="gene ID" value="ENSG00000075624.17"/>
</dbReference>
<dbReference type="Ensembl" id="ENST00000646664.1">
    <property type="protein sequence ID" value="ENSP00000494750.1"/>
    <property type="gene ID" value="ENSG00000075624.17"/>
</dbReference>
<dbReference type="Ensembl" id="ENST00000674681.1">
    <property type="protein sequence ID" value="ENSP00000502821.1"/>
    <property type="gene ID" value="ENSG00000075624.17"/>
</dbReference>
<dbReference type="Ensembl" id="ENST00000675515.1">
    <property type="protein sequence ID" value="ENSP00000501862.1"/>
    <property type="gene ID" value="ENSG00000075624.17"/>
</dbReference>
<dbReference type="GeneID" id="60"/>
<dbReference type="KEGG" id="hsa:60"/>
<dbReference type="MANE-Select" id="ENST00000646664.1">
    <property type="protein sequence ID" value="ENSP00000494750.1"/>
    <property type="RefSeq nucleotide sequence ID" value="NM_001101.5"/>
    <property type="RefSeq protein sequence ID" value="NP_001092.1"/>
</dbReference>
<dbReference type="AGR" id="HGNC:132"/>
<dbReference type="CTD" id="60"/>
<dbReference type="DisGeNET" id="60"/>
<dbReference type="GeneCards" id="ACTB"/>
<dbReference type="GeneReviews" id="ACTB"/>
<dbReference type="HGNC" id="HGNC:132">
    <property type="gene designation" value="ACTB"/>
</dbReference>
<dbReference type="HPA" id="ENSG00000075624">
    <property type="expression patterns" value="Low tissue specificity"/>
</dbReference>
<dbReference type="MalaCards" id="ACTB"/>
<dbReference type="MIM" id="102630">
    <property type="type" value="gene"/>
</dbReference>
<dbReference type="MIM" id="243310">
    <property type="type" value="phenotype"/>
</dbReference>
<dbReference type="MIM" id="604919">
    <property type="type" value="phenotype"/>
</dbReference>
<dbReference type="MIM" id="607371">
    <property type="type" value="phenotype"/>
</dbReference>
<dbReference type="MIM" id="620470">
    <property type="type" value="phenotype"/>
</dbReference>
<dbReference type="MIM" id="620475">
    <property type="type" value="phenotype"/>
</dbReference>
<dbReference type="neXtProt" id="NX_P60709"/>
<dbReference type="OpenTargets" id="ENSG00000075624"/>
<dbReference type="Orphanet" id="674653">
    <property type="disease" value="Actinomyopathy-associated syndromic thrombocytopenia"/>
</dbReference>
<dbReference type="Orphanet" id="2995">
    <property type="disease" value="Baraitser-Winter cerebrofrontofacial syndrome"/>
</dbReference>
<dbReference type="Orphanet" id="64755">
    <property type="disease" value="Becker nevus syndrome"/>
</dbReference>
<dbReference type="Orphanet" id="79107">
    <property type="disease" value="Developmental malformations-deafness-dystonia syndrome"/>
</dbReference>
<dbReference type="Orphanet" id="673556">
    <property type="disease" value="Pseudomyogenic hemangioendothelioma"/>
</dbReference>
<dbReference type="PharmGKB" id="PA24457"/>
<dbReference type="VEuPathDB" id="HostDB:ENSG00000075624"/>
<dbReference type="eggNOG" id="KOG0676">
    <property type="taxonomic scope" value="Eukaryota"/>
</dbReference>
<dbReference type="GeneTree" id="ENSGT00950000182960"/>
<dbReference type="HOGENOM" id="CLU_027965_0_2_1"/>
<dbReference type="InParanoid" id="P60709"/>
<dbReference type="OMA" id="KCDESIC"/>
<dbReference type="OrthoDB" id="9816605at2759"/>
<dbReference type="PAN-GO" id="P60709">
    <property type="GO annotations" value="10 GO annotations based on evolutionary models"/>
</dbReference>
<dbReference type="PhylomeDB" id="P60709"/>
<dbReference type="TreeFam" id="TF354237"/>
<dbReference type="PathwayCommons" id="P60709"/>
<dbReference type="Reactome" id="R-HSA-1445148">
    <property type="pathway name" value="Translocation of SLC2A4 (GLUT4) to the plasma membrane"/>
</dbReference>
<dbReference type="Reactome" id="R-HSA-190873">
    <property type="pathway name" value="Gap junction degradation"/>
</dbReference>
<dbReference type="Reactome" id="R-HSA-196025">
    <property type="pathway name" value="Formation of annular gap junctions"/>
</dbReference>
<dbReference type="Reactome" id="R-HSA-2029482">
    <property type="pathway name" value="Regulation of actin dynamics for phagocytic cup formation"/>
</dbReference>
<dbReference type="Reactome" id="R-HSA-3214847">
    <property type="pathway name" value="HATs acetylate histones"/>
</dbReference>
<dbReference type="Reactome" id="R-HSA-389957">
    <property type="pathway name" value="Prefoldin mediated transfer of substrate to CCT/TriC"/>
</dbReference>
<dbReference type="Reactome" id="R-HSA-390450">
    <property type="pathway name" value="Folding of actin by CCT/TriC"/>
</dbReference>
<dbReference type="Reactome" id="R-HSA-3928662">
    <property type="pathway name" value="EPHB-mediated forward signaling"/>
</dbReference>
<dbReference type="Reactome" id="R-HSA-3928665">
    <property type="pathway name" value="EPH-ephrin mediated repulsion of cells"/>
</dbReference>
<dbReference type="Reactome" id="R-HSA-418990">
    <property type="pathway name" value="Adherens junctions interactions"/>
</dbReference>
<dbReference type="Reactome" id="R-HSA-437239">
    <property type="pathway name" value="Recycling pathway of L1"/>
</dbReference>
<dbReference type="Reactome" id="R-HSA-4420097">
    <property type="pathway name" value="VEGFA-VEGFR2 Pathway"/>
</dbReference>
<dbReference type="Reactome" id="R-HSA-445095">
    <property type="pathway name" value="Interaction between L1 and Ankyrins"/>
</dbReference>
<dbReference type="Reactome" id="R-HSA-446353">
    <property type="pathway name" value="Cell-extracellular matrix interactions"/>
</dbReference>
<dbReference type="Reactome" id="R-HSA-5250924">
    <property type="pathway name" value="B-WICH complex positively regulates rRNA expression"/>
</dbReference>
<dbReference type="Reactome" id="R-HSA-5626467">
    <property type="pathway name" value="RHO GTPases activate IQGAPs"/>
</dbReference>
<dbReference type="Reactome" id="R-HSA-5663213">
    <property type="pathway name" value="RHO GTPases Activate WASPs and WAVEs"/>
</dbReference>
<dbReference type="Reactome" id="R-HSA-5663220">
    <property type="pathway name" value="RHO GTPases Activate Formins"/>
</dbReference>
<dbReference type="Reactome" id="R-HSA-5674135">
    <property type="pathway name" value="MAP2K and MAPK activation"/>
</dbReference>
<dbReference type="Reactome" id="R-HSA-5689603">
    <property type="pathway name" value="UCH proteinases"/>
</dbReference>
<dbReference type="Reactome" id="R-HSA-5696394">
    <property type="pathway name" value="DNA Damage Recognition in GG-NER"/>
</dbReference>
<dbReference type="Reactome" id="R-HSA-6802946">
    <property type="pathway name" value="Signaling by moderate kinase activity BRAF mutants"/>
</dbReference>
<dbReference type="Reactome" id="R-HSA-6802948">
    <property type="pathway name" value="Signaling by high-kinase activity BRAF mutants"/>
</dbReference>
<dbReference type="Reactome" id="R-HSA-6802952">
    <property type="pathway name" value="Signaling by BRAF and RAF1 fusions"/>
</dbReference>
<dbReference type="Reactome" id="R-HSA-6802955">
    <property type="pathway name" value="Paradoxical activation of RAF signaling by kinase inactive BRAF"/>
</dbReference>
<dbReference type="Reactome" id="R-HSA-8856828">
    <property type="pathway name" value="Clathrin-mediated endocytosis"/>
</dbReference>
<dbReference type="Reactome" id="R-HSA-9035034">
    <property type="pathway name" value="RHOF GTPase cycle"/>
</dbReference>
<dbReference type="Reactome" id="R-HSA-9649948">
    <property type="pathway name" value="Signaling downstream of RAS mutants"/>
</dbReference>
<dbReference type="Reactome" id="R-HSA-9656223">
    <property type="pathway name" value="Signaling by RAF1 mutants"/>
</dbReference>
<dbReference type="Reactome" id="R-HSA-9662360">
    <property type="pathway name" value="Sensory processing of sound by inner hair cells of the cochlea"/>
</dbReference>
<dbReference type="Reactome" id="R-HSA-9662361">
    <property type="pathway name" value="Sensory processing of sound by outer hair cells of the cochlea"/>
</dbReference>
<dbReference type="Reactome" id="R-HSA-9664422">
    <property type="pathway name" value="FCGR3A-mediated phagocytosis"/>
</dbReference>
<dbReference type="Reactome" id="R-HSA-9824585">
    <property type="pathway name" value="Regulation of MITF-M-dependent genes involved in pigmentation"/>
</dbReference>
<dbReference type="Reactome" id="R-HSA-983231">
    <property type="pathway name" value="Factors involved in megakaryocyte development and platelet production"/>
</dbReference>
<dbReference type="Reactome" id="R-HSA-9845323">
    <property type="pathway name" value="Regulation of endogenous retroelements by Piwi-interacting RNAs (piRNAs)"/>
</dbReference>
<dbReference type="Reactome" id="R-HSA-9913351">
    <property type="pathway name" value="Formation of the dystrophin-glycoprotein complex (DGC)"/>
</dbReference>
<dbReference type="SignaLink" id="P60709"/>
<dbReference type="SIGNOR" id="P60709"/>
<dbReference type="BioGRID-ORCS" id="60">
    <property type="hits" value="541 hits in 1170 CRISPR screens"/>
</dbReference>
<dbReference type="CD-CODE" id="232F8A39">
    <property type="entry name" value="P-body"/>
</dbReference>
<dbReference type="CD-CODE" id="91857CE7">
    <property type="entry name" value="Nucleolus"/>
</dbReference>
<dbReference type="CD-CODE" id="F85A2E29">
    <property type="entry name" value="IMP1 RNP granule"/>
</dbReference>
<dbReference type="CD-CODE" id="FB4E32DD">
    <property type="entry name" value="Presynaptic clusters and postsynaptic densities"/>
</dbReference>
<dbReference type="ChiTaRS" id="ACTB">
    <property type="organism name" value="human"/>
</dbReference>
<dbReference type="EvolutionaryTrace" id="P60709"/>
<dbReference type="GeneWiki" id="Beta-actin"/>
<dbReference type="GenomeRNAi" id="60"/>
<dbReference type="Pharos" id="P60709">
    <property type="development level" value="Tbio"/>
</dbReference>
<dbReference type="PRO" id="PR:P60709"/>
<dbReference type="Proteomes" id="UP000005640">
    <property type="component" value="Chromosome 7"/>
</dbReference>
<dbReference type="RNAct" id="P60709">
    <property type="molecule type" value="protein"/>
</dbReference>
<dbReference type="Bgee" id="ENSG00000075624">
    <property type="expression patterns" value="Expressed in saphenous vein and 212 other cell types or tissues"/>
</dbReference>
<dbReference type="ExpressionAtlas" id="P60709">
    <property type="expression patterns" value="baseline and differential"/>
</dbReference>
<dbReference type="GO" id="GO:0015629">
    <property type="term" value="C:actin cytoskeleton"/>
    <property type="evidence" value="ECO:0000314"/>
    <property type="project" value="UniProtKB"/>
</dbReference>
<dbReference type="GO" id="GO:0005884">
    <property type="term" value="C:actin filament"/>
    <property type="evidence" value="ECO:0000318"/>
    <property type="project" value="GO_Central"/>
</dbReference>
<dbReference type="GO" id="GO:0005912">
    <property type="term" value="C:adherens junction"/>
    <property type="evidence" value="ECO:0000314"/>
    <property type="project" value="ARUK-UCL"/>
</dbReference>
<dbReference type="GO" id="GO:0043296">
    <property type="term" value="C:apical junction complex"/>
    <property type="evidence" value="ECO:0000314"/>
    <property type="project" value="ARUK-UCL"/>
</dbReference>
<dbReference type="GO" id="GO:0030424">
    <property type="term" value="C:axon"/>
    <property type="evidence" value="ECO:0000318"/>
    <property type="project" value="GO_Central"/>
</dbReference>
<dbReference type="GO" id="GO:0140092">
    <property type="term" value="C:bBAF complex"/>
    <property type="evidence" value="ECO:0000303"/>
    <property type="project" value="ComplexPortal"/>
</dbReference>
<dbReference type="GO" id="GO:0072562">
    <property type="term" value="C:blood microparticle"/>
    <property type="evidence" value="ECO:0007005"/>
    <property type="project" value="UniProtKB"/>
</dbReference>
<dbReference type="GO" id="GO:0035060">
    <property type="term" value="C:brahma complex"/>
    <property type="evidence" value="ECO:0000303"/>
    <property type="project" value="ComplexPortal"/>
</dbReference>
<dbReference type="GO" id="GO:0005903">
    <property type="term" value="C:brush border"/>
    <property type="evidence" value="ECO:0007669"/>
    <property type="project" value="Ensembl"/>
</dbReference>
<dbReference type="GO" id="GO:0044305">
    <property type="term" value="C:calyx of Held"/>
    <property type="evidence" value="ECO:0007669"/>
    <property type="project" value="Ensembl"/>
</dbReference>
<dbReference type="GO" id="GO:0005911">
    <property type="term" value="C:cell-cell junction"/>
    <property type="evidence" value="ECO:0000315"/>
    <property type="project" value="ARUK-UCL"/>
</dbReference>
<dbReference type="GO" id="GO:0000785">
    <property type="term" value="C:chromatin"/>
    <property type="evidence" value="ECO:0007005"/>
    <property type="project" value="UniProtKB"/>
</dbReference>
<dbReference type="GO" id="GO:0030863">
    <property type="term" value="C:cortical cytoskeleton"/>
    <property type="evidence" value="ECO:0007669"/>
    <property type="project" value="Ensembl"/>
</dbReference>
<dbReference type="GO" id="GO:0005737">
    <property type="term" value="C:cytoplasm"/>
    <property type="evidence" value="ECO:0000314"/>
    <property type="project" value="ARUK-UCL"/>
</dbReference>
<dbReference type="GO" id="GO:0036464">
    <property type="term" value="C:cytoplasmic ribonucleoprotein granule"/>
    <property type="evidence" value="ECO:0000314"/>
    <property type="project" value="ParkinsonsUK-UCL"/>
</dbReference>
<dbReference type="GO" id="GO:0005856">
    <property type="term" value="C:cytoskeleton"/>
    <property type="evidence" value="ECO:0000314"/>
    <property type="project" value="ARUK-UCL"/>
</dbReference>
<dbReference type="GO" id="GO:0005829">
    <property type="term" value="C:cytosol"/>
    <property type="evidence" value="ECO:0000304"/>
    <property type="project" value="Reactome"/>
</dbReference>
<dbReference type="GO" id="GO:0097433">
    <property type="term" value="C:dense body"/>
    <property type="evidence" value="ECO:0000250"/>
    <property type="project" value="AgBase"/>
</dbReference>
<dbReference type="GO" id="GO:0070062">
    <property type="term" value="C:extracellular exosome"/>
    <property type="evidence" value="ECO:0007005"/>
    <property type="project" value="UniProtKB"/>
</dbReference>
<dbReference type="GO" id="GO:0005615">
    <property type="term" value="C:extracellular space"/>
    <property type="evidence" value="ECO:0007005"/>
    <property type="project" value="UniProtKB"/>
</dbReference>
<dbReference type="GO" id="GO:0005925">
    <property type="term" value="C:focal adhesion"/>
    <property type="evidence" value="ECO:0007005"/>
    <property type="project" value="UniProtKB"/>
</dbReference>
<dbReference type="GO" id="GO:0140288">
    <property type="term" value="C:GBAF complex"/>
    <property type="evidence" value="ECO:0000303"/>
    <property type="project" value="ComplexPortal"/>
</dbReference>
<dbReference type="GO" id="GO:0098978">
    <property type="term" value="C:glutamatergic synapse"/>
    <property type="evidence" value="ECO:0000314"/>
    <property type="project" value="SynGO"/>
</dbReference>
<dbReference type="GO" id="GO:0000776">
    <property type="term" value="C:kinetochore"/>
    <property type="evidence" value="ECO:0000303"/>
    <property type="project" value="ComplexPortal"/>
</dbReference>
<dbReference type="GO" id="GO:0030027">
    <property type="term" value="C:lamellipodium"/>
    <property type="evidence" value="ECO:0000314"/>
    <property type="project" value="ARUK-UCL"/>
</dbReference>
<dbReference type="GO" id="GO:0016020">
    <property type="term" value="C:membrane"/>
    <property type="evidence" value="ECO:0007005"/>
    <property type="project" value="UniProtKB"/>
</dbReference>
<dbReference type="GO" id="GO:0071565">
    <property type="term" value="C:nBAF complex"/>
    <property type="evidence" value="ECO:0000303"/>
    <property type="project" value="ComplexPortal"/>
</dbReference>
<dbReference type="GO" id="GO:0071564">
    <property type="term" value="C:npBAF complex"/>
    <property type="evidence" value="ECO:0000303"/>
    <property type="project" value="ComplexPortal"/>
</dbReference>
<dbReference type="GO" id="GO:0035267">
    <property type="term" value="C:NuA4 histone acetyltransferase complex"/>
    <property type="evidence" value="ECO:0000314"/>
    <property type="project" value="UniProtKB"/>
</dbReference>
<dbReference type="GO" id="GO:0016363">
    <property type="term" value="C:nuclear matrix"/>
    <property type="evidence" value="ECO:0000303"/>
    <property type="project" value="ComplexPortal"/>
</dbReference>
<dbReference type="GO" id="GO:0005654">
    <property type="term" value="C:nucleoplasm"/>
    <property type="evidence" value="ECO:0000304"/>
    <property type="project" value="Reactome"/>
</dbReference>
<dbReference type="GO" id="GO:0000786">
    <property type="term" value="C:nucleosome"/>
    <property type="evidence" value="ECO:0000314"/>
    <property type="project" value="ComplexPortal"/>
</dbReference>
<dbReference type="GO" id="GO:0005634">
    <property type="term" value="C:nucleus"/>
    <property type="evidence" value="ECO:0000314"/>
    <property type="project" value="UniProtKB"/>
</dbReference>
<dbReference type="GO" id="GO:0005886">
    <property type="term" value="C:plasma membrane"/>
    <property type="evidence" value="ECO:0000250"/>
    <property type="project" value="AgBase"/>
</dbReference>
<dbReference type="GO" id="GO:0098871">
    <property type="term" value="C:postsynaptic actin cytoskeleton"/>
    <property type="evidence" value="ECO:0000314"/>
    <property type="project" value="SynGO"/>
</dbReference>
<dbReference type="GO" id="GO:0098793">
    <property type="term" value="C:presynapse"/>
    <property type="evidence" value="ECO:0000304"/>
    <property type="project" value="ARUK-UCL"/>
</dbReference>
<dbReference type="GO" id="GO:0032991">
    <property type="term" value="C:protein-containing complex"/>
    <property type="evidence" value="ECO:0000314"/>
    <property type="project" value="UniProtKB"/>
</dbReference>
<dbReference type="GO" id="GO:1990904">
    <property type="term" value="C:ribonucleoprotein complex"/>
    <property type="evidence" value="ECO:0000314"/>
    <property type="project" value="UniProtKB"/>
</dbReference>
<dbReference type="GO" id="GO:0016586">
    <property type="term" value="C:RSC-type complex"/>
    <property type="evidence" value="ECO:0000303"/>
    <property type="project" value="ComplexPortal"/>
</dbReference>
<dbReference type="GO" id="GO:0098685">
    <property type="term" value="C:Schaffer collateral - CA1 synapse"/>
    <property type="evidence" value="ECO:0007669"/>
    <property type="project" value="Ensembl"/>
</dbReference>
<dbReference type="GO" id="GO:0016514">
    <property type="term" value="C:SWI/SNF complex"/>
    <property type="evidence" value="ECO:0000303"/>
    <property type="project" value="ComplexPortal"/>
</dbReference>
<dbReference type="GO" id="GO:0045202">
    <property type="term" value="C:synapse"/>
    <property type="evidence" value="ECO:0000318"/>
    <property type="project" value="GO_Central"/>
</dbReference>
<dbReference type="GO" id="GO:0070160">
    <property type="term" value="C:tight junction"/>
    <property type="evidence" value="ECO:0000314"/>
    <property type="project" value="ARUK-UCL"/>
</dbReference>
<dbReference type="GO" id="GO:0031982">
    <property type="term" value="C:vesicle"/>
    <property type="evidence" value="ECO:0007005"/>
    <property type="project" value="UniProtKB"/>
</dbReference>
<dbReference type="GO" id="GO:0005524">
    <property type="term" value="F:ATP binding"/>
    <property type="evidence" value="ECO:0007669"/>
    <property type="project" value="UniProtKB-KW"/>
</dbReference>
<dbReference type="GO" id="GO:0016887">
    <property type="term" value="F:ATP hydrolysis activity"/>
    <property type="evidence" value="ECO:0000314"/>
    <property type="project" value="UniProtKB"/>
</dbReference>
<dbReference type="GO" id="GO:0042802">
    <property type="term" value="F:identical protein binding"/>
    <property type="evidence" value="ECO:0000353"/>
    <property type="project" value="IntAct"/>
</dbReference>
<dbReference type="GO" id="GO:0019894">
    <property type="term" value="F:kinesin binding"/>
    <property type="evidence" value="ECO:0000353"/>
    <property type="project" value="UniProtKB"/>
</dbReference>
<dbReference type="GO" id="GO:0050998">
    <property type="term" value="F:nitric-oxide synthase binding"/>
    <property type="evidence" value="ECO:0000353"/>
    <property type="project" value="BHF-UCL"/>
</dbReference>
<dbReference type="GO" id="GO:0030235">
    <property type="term" value="F:nitric-oxide synthase regulator activity"/>
    <property type="evidence" value="ECO:0000314"/>
    <property type="project" value="BHF-UCL"/>
</dbReference>
<dbReference type="GO" id="GO:0019901">
    <property type="term" value="F:protein kinase binding"/>
    <property type="evidence" value="ECO:0000353"/>
    <property type="project" value="ARUK-UCL"/>
</dbReference>
<dbReference type="GO" id="GO:0005200">
    <property type="term" value="F:structural constituent of cytoskeleton"/>
    <property type="evidence" value="ECO:0000304"/>
    <property type="project" value="UniProtKB"/>
</dbReference>
<dbReference type="GO" id="GO:0098973">
    <property type="term" value="F:structural constituent of postsynaptic actin cytoskeleton"/>
    <property type="evidence" value="ECO:0000314"/>
    <property type="project" value="SynGO"/>
</dbReference>
<dbReference type="GO" id="GO:0030957">
    <property type="term" value="F:Tat protein binding"/>
    <property type="evidence" value="ECO:0000353"/>
    <property type="project" value="BHF-UCL"/>
</dbReference>
<dbReference type="GO" id="GO:0048156">
    <property type="term" value="F:tau protein binding"/>
    <property type="evidence" value="ECO:0000303"/>
    <property type="project" value="ARUK-UCL"/>
</dbReference>
<dbReference type="GO" id="GO:0141108">
    <property type="term" value="F:transporter regulator activity"/>
    <property type="evidence" value="ECO:0000316"/>
    <property type="project" value="ARUK-UCL"/>
</dbReference>
<dbReference type="GO" id="GO:0034333">
    <property type="term" value="P:adherens junction assembly"/>
    <property type="evidence" value="ECO:0000315"/>
    <property type="project" value="ARUK-UCL"/>
</dbReference>
<dbReference type="GO" id="GO:0045176">
    <property type="term" value="P:apical protein localization"/>
    <property type="evidence" value="ECO:0000315"/>
    <property type="project" value="ARUK-UCL"/>
</dbReference>
<dbReference type="GO" id="GO:0007409">
    <property type="term" value="P:axonogenesis"/>
    <property type="evidence" value="ECO:0000318"/>
    <property type="project" value="GO_Central"/>
</dbReference>
<dbReference type="GO" id="GO:0048870">
    <property type="term" value="P:cell motility"/>
    <property type="evidence" value="ECO:0000315"/>
    <property type="project" value="UniProtKB"/>
</dbReference>
<dbReference type="GO" id="GO:0072749">
    <property type="term" value="P:cellular response to cytochalasin B"/>
    <property type="evidence" value="ECO:0000315"/>
    <property type="project" value="UniProtKB"/>
</dbReference>
<dbReference type="GO" id="GO:0006338">
    <property type="term" value="P:chromatin remodeling"/>
    <property type="evidence" value="ECO:0007005"/>
    <property type="project" value="GO_Central"/>
</dbReference>
<dbReference type="GO" id="GO:0007010">
    <property type="term" value="P:cytoskeleton organization"/>
    <property type="evidence" value="ECO:0000250"/>
    <property type="project" value="ARUK-UCL"/>
</dbReference>
<dbReference type="GO" id="GO:0007163">
    <property type="term" value="P:establishment or maintenance of cell polarity"/>
    <property type="evidence" value="ECO:0000315"/>
    <property type="project" value="ARUK-UCL"/>
</dbReference>
<dbReference type="GO" id="GO:0035633">
    <property type="term" value="P:maintenance of blood-brain barrier"/>
    <property type="evidence" value="ECO:0000303"/>
    <property type="project" value="ARUK-UCL"/>
</dbReference>
<dbReference type="GO" id="GO:0001738">
    <property type="term" value="P:morphogenesis of a polarized epithelium"/>
    <property type="evidence" value="ECO:0000315"/>
    <property type="project" value="ARUK-UCL"/>
</dbReference>
<dbReference type="GO" id="GO:0045596">
    <property type="term" value="P:negative regulation of cell differentiation"/>
    <property type="evidence" value="ECO:0000303"/>
    <property type="project" value="ComplexPortal"/>
</dbReference>
<dbReference type="GO" id="GO:0070527">
    <property type="term" value="P:platelet aggregation"/>
    <property type="evidence" value="ECO:0007001"/>
    <property type="project" value="UniProtKB"/>
</dbReference>
<dbReference type="GO" id="GO:0045597">
    <property type="term" value="P:positive regulation of cell differentiation"/>
    <property type="evidence" value="ECO:0000303"/>
    <property type="project" value="ComplexPortal"/>
</dbReference>
<dbReference type="GO" id="GO:0008284">
    <property type="term" value="P:positive regulation of cell population proliferation"/>
    <property type="evidence" value="ECO:0000303"/>
    <property type="project" value="ComplexPortal"/>
</dbReference>
<dbReference type="GO" id="GO:0045893">
    <property type="term" value="P:positive regulation of DNA-templated transcription"/>
    <property type="evidence" value="ECO:0000303"/>
    <property type="project" value="ComplexPortal"/>
</dbReference>
<dbReference type="GO" id="GO:2000781">
    <property type="term" value="P:positive regulation of double-strand break repair"/>
    <property type="evidence" value="ECO:0000303"/>
    <property type="project" value="ComplexPortal"/>
</dbReference>
<dbReference type="GO" id="GO:1905168">
    <property type="term" value="P:positive regulation of double-strand break repair via homologous recombination"/>
    <property type="evidence" value="ECO:0000314"/>
    <property type="project" value="ComplexPortal"/>
</dbReference>
<dbReference type="GO" id="GO:0045663">
    <property type="term" value="P:positive regulation of myoblast differentiation"/>
    <property type="evidence" value="ECO:0000303"/>
    <property type="project" value="ComplexPortal"/>
</dbReference>
<dbReference type="GO" id="GO:0051623">
    <property type="term" value="P:positive regulation of norepinephrine uptake"/>
    <property type="evidence" value="ECO:0000304"/>
    <property type="project" value="ARUK-UCL"/>
</dbReference>
<dbReference type="GO" id="GO:1902459">
    <property type="term" value="P:positive regulation of stem cell population maintenance"/>
    <property type="evidence" value="ECO:0000303"/>
    <property type="project" value="ComplexPortal"/>
</dbReference>
<dbReference type="GO" id="GO:0045582">
    <property type="term" value="P:positive regulation of T cell differentiation"/>
    <property type="evidence" value="ECO:0000303"/>
    <property type="project" value="ComplexPortal"/>
</dbReference>
<dbReference type="GO" id="GO:0071896">
    <property type="term" value="P:protein localization to adherens junction"/>
    <property type="evidence" value="ECO:0000315"/>
    <property type="project" value="ARUK-UCL"/>
</dbReference>
<dbReference type="GO" id="GO:0042981">
    <property type="term" value="P:regulation of apoptotic process"/>
    <property type="evidence" value="ECO:0000303"/>
    <property type="project" value="ComplexPortal"/>
</dbReference>
<dbReference type="GO" id="GO:0051726">
    <property type="term" value="P:regulation of cell cycle"/>
    <property type="evidence" value="ECO:0000315"/>
    <property type="project" value="ComplexPortal"/>
</dbReference>
<dbReference type="GO" id="GO:2000779">
    <property type="term" value="P:regulation of double-strand break repair"/>
    <property type="evidence" value="ECO:0000303"/>
    <property type="project" value="ComplexPortal"/>
</dbReference>
<dbReference type="GO" id="GO:0070316">
    <property type="term" value="P:regulation of G0 to G1 transition"/>
    <property type="evidence" value="ECO:0000303"/>
    <property type="project" value="ComplexPortal"/>
</dbReference>
<dbReference type="GO" id="GO:2000045">
    <property type="term" value="P:regulation of G1/S transition of mitotic cell cycle"/>
    <property type="evidence" value="ECO:0000303"/>
    <property type="project" value="ComplexPortal"/>
</dbReference>
<dbReference type="GO" id="GO:0030071">
    <property type="term" value="P:regulation of mitotic metaphase/anaphase transition"/>
    <property type="evidence" value="ECO:0000303"/>
    <property type="project" value="ComplexPortal"/>
</dbReference>
<dbReference type="GO" id="GO:0051621">
    <property type="term" value="P:regulation of norepinephrine uptake"/>
    <property type="evidence" value="ECO:0000316"/>
    <property type="project" value="ARUK-UCL"/>
</dbReference>
<dbReference type="GO" id="GO:2000819">
    <property type="term" value="P:regulation of nucleotide-excision repair"/>
    <property type="evidence" value="ECO:0000303"/>
    <property type="project" value="ComplexPortal"/>
</dbReference>
<dbReference type="GO" id="GO:1903076">
    <property type="term" value="P:regulation of protein localization to plasma membrane"/>
    <property type="evidence" value="ECO:0000315"/>
    <property type="project" value="ARUK-UCL"/>
</dbReference>
<dbReference type="GO" id="GO:1900242">
    <property type="term" value="P:regulation of synaptic vesicle endocytosis"/>
    <property type="evidence" value="ECO:0007669"/>
    <property type="project" value="Ensembl"/>
</dbReference>
<dbReference type="GO" id="GO:0006357">
    <property type="term" value="P:regulation of transcription by RNA polymerase II"/>
    <property type="evidence" value="ECO:0000303"/>
    <property type="project" value="ComplexPortal"/>
</dbReference>
<dbReference type="GO" id="GO:0150111">
    <property type="term" value="P:regulation of transepithelial transport"/>
    <property type="evidence" value="ECO:0000315"/>
    <property type="project" value="ARUK-UCL"/>
</dbReference>
<dbReference type="GO" id="GO:0021762">
    <property type="term" value="P:substantia nigra development"/>
    <property type="evidence" value="ECO:0007007"/>
    <property type="project" value="UniProtKB"/>
</dbReference>
<dbReference type="CDD" id="cd10224">
    <property type="entry name" value="ASKHA_NBD_actin"/>
    <property type="match status" value="1"/>
</dbReference>
<dbReference type="FunFam" id="3.30.420.40:FF:000131">
    <property type="entry name" value="Actin, alpha skeletal muscle"/>
    <property type="match status" value="1"/>
</dbReference>
<dbReference type="FunFam" id="3.30.420.40:FF:000291">
    <property type="entry name" value="Actin, alpha skeletal muscle"/>
    <property type="match status" value="1"/>
</dbReference>
<dbReference type="FunFam" id="3.90.640.10:FF:000047">
    <property type="entry name" value="Actin, alpha skeletal muscle"/>
    <property type="match status" value="1"/>
</dbReference>
<dbReference type="FunFam" id="3.30.420.40:FF:000058">
    <property type="entry name" value="Putative actin-related protein 5"/>
    <property type="match status" value="1"/>
</dbReference>
<dbReference type="Gene3D" id="3.30.420.40">
    <property type="match status" value="2"/>
</dbReference>
<dbReference type="Gene3D" id="3.90.640.10">
    <property type="entry name" value="Actin, Chain A, domain 4"/>
    <property type="match status" value="1"/>
</dbReference>
<dbReference type="InterPro" id="IPR004000">
    <property type="entry name" value="Actin"/>
</dbReference>
<dbReference type="InterPro" id="IPR020902">
    <property type="entry name" value="Actin/actin-like_CS"/>
</dbReference>
<dbReference type="InterPro" id="IPR004001">
    <property type="entry name" value="Actin_CS"/>
</dbReference>
<dbReference type="InterPro" id="IPR043129">
    <property type="entry name" value="ATPase_NBD"/>
</dbReference>
<dbReference type="PANTHER" id="PTHR11937">
    <property type="entry name" value="ACTIN"/>
    <property type="match status" value="1"/>
</dbReference>
<dbReference type="Pfam" id="PF00022">
    <property type="entry name" value="Actin"/>
    <property type="match status" value="1"/>
</dbReference>
<dbReference type="PRINTS" id="PR00190">
    <property type="entry name" value="ACTIN"/>
</dbReference>
<dbReference type="SMART" id="SM00268">
    <property type="entry name" value="ACTIN"/>
    <property type="match status" value="1"/>
</dbReference>
<dbReference type="SUPFAM" id="SSF53067">
    <property type="entry name" value="Actin-like ATPase domain"/>
    <property type="match status" value="2"/>
</dbReference>
<dbReference type="PROSITE" id="PS00406">
    <property type="entry name" value="ACTINS_1"/>
    <property type="match status" value="1"/>
</dbReference>
<dbReference type="PROSITE" id="PS00432">
    <property type="entry name" value="ACTINS_2"/>
    <property type="match status" value="1"/>
</dbReference>
<dbReference type="PROSITE" id="PS01132">
    <property type="entry name" value="ACTINS_ACT_LIKE"/>
    <property type="match status" value="1"/>
</dbReference>
<name>ACTB_HUMAN</name>
<protein>
    <recommendedName>
        <fullName>Actin, cytoplasmic 1</fullName>
        <ecNumber evidence="3">3.6.4.-</ecNumber>
    </recommendedName>
    <alternativeName>
        <fullName>Beta-actin</fullName>
    </alternativeName>
    <component>
        <recommendedName>
            <fullName>Actin, cytoplasmic 1, N-terminally processed</fullName>
        </recommendedName>
    </component>
</protein>
<reference key="1">
    <citation type="journal article" date="1984" name="Nucleic Acids Res.">
        <title>Evolutionary conservation in the untranslated regions of actin mRNAs: DNA sequence of a human beta-actin cDNA.</title>
        <authorList>
            <person name="Ponte P."/>
            <person name="Ng S.Y."/>
            <person name="Engel J."/>
            <person name="Gunning P."/>
            <person name="Kedes L."/>
        </authorList>
    </citation>
    <scope>NUCLEOTIDE SEQUENCE [MRNA]</scope>
</reference>
<reference key="2">
    <citation type="journal article" date="1985" name="Proc. Natl. Acad. Sci. U.S.A.">
        <title>Molecular structure of the human cytoplasmic beta-actin gene: interspecies homology of sequences in the introns.</title>
        <authorList>
            <person name="Nakajima-Iijima S."/>
            <person name="Hamada H."/>
            <person name="Reddy P."/>
            <person name="Kakunaga T."/>
        </authorList>
    </citation>
    <scope>NUCLEOTIDE SEQUENCE [GENOMIC DNA]</scope>
</reference>
<reference key="3">
    <citation type="journal article" date="1992" name="J. Cell Biol.">
        <title>Direct proof that the primary site of action of cytochalasin on cell motility processes is actin.</title>
        <authorList>
            <person name="Ohmori H."/>
            <person name="Toyama S."/>
            <person name="Toyama S."/>
        </authorList>
    </citation>
    <scope>NUCLEOTIDE SEQUENCE [MRNA]</scope>
</reference>
<reference key="4">
    <citation type="submission" date="2004-03" db="EMBL/GenBank/DDBJ databases">
        <authorList>
            <consortium name="NIEHS SNPs program"/>
        </authorList>
    </citation>
    <scope>NUCLEOTIDE SEQUENCE [GENOMIC DNA]</scope>
</reference>
<reference key="5">
    <citation type="journal article" date="2003" name="Nature">
        <title>The DNA sequence of human chromosome 7.</title>
        <authorList>
            <person name="Hillier L.W."/>
            <person name="Fulton R.S."/>
            <person name="Fulton L.A."/>
            <person name="Graves T.A."/>
            <person name="Pepin K.H."/>
            <person name="Wagner-McPherson C."/>
            <person name="Layman D."/>
            <person name="Maas J."/>
            <person name="Jaeger S."/>
            <person name="Walker R."/>
            <person name="Wylie K."/>
            <person name="Sekhon M."/>
            <person name="Becker M.C."/>
            <person name="O'Laughlin M.D."/>
            <person name="Schaller M.E."/>
            <person name="Fewell G.A."/>
            <person name="Delehaunty K.D."/>
            <person name="Miner T.L."/>
            <person name="Nash W.E."/>
            <person name="Cordes M."/>
            <person name="Du H."/>
            <person name="Sun H."/>
            <person name="Edwards J."/>
            <person name="Bradshaw-Cordum H."/>
            <person name="Ali J."/>
            <person name="Andrews S."/>
            <person name="Isak A."/>
            <person name="Vanbrunt A."/>
            <person name="Nguyen C."/>
            <person name="Du F."/>
            <person name="Lamar B."/>
            <person name="Courtney L."/>
            <person name="Kalicki J."/>
            <person name="Ozersky P."/>
            <person name="Bielicki L."/>
            <person name="Scott K."/>
            <person name="Holmes A."/>
            <person name="Harkins R."/>
            <person name="Harris A."/>
            <person name="Strong C.M."/>
            <person name="Hou S."/>
            <person name="Tomlinson C."/>
            <person name="Dauphin-Kohlberg S."/>
            <person name="Kozlowicz-Reilly A."/>
            <person name="Leonard S."/>
            <person name="Rohlfing T."/>
            <person name="Rock S.M."/>
            <person name="Tin-Wollam A.-M."/>
            <person name="Abbott A."/>
            <person name="Minx P."/>
            <person name="Maupin R."/>
            <person name="Strowmatt C."/>
            <person name="Latreille P."/>
            <person name="Miller N."/>
            <person name="Johnson D."/>
            <person name="Murray J."/>
            <person name="Woessner J.P."/>
            <person name="Wendl M.C."/>
            <person name="Yang S.-P."/>
            <person name="Schultz B.R."/>
            <person name="Wallis J.W."/>
            <person name="Spieth J."/>
            <person name="Bieri T.A."/>
            <person name="Nelson J.O."/>
            <person name="Berkowicz N."/>
            <person name="Wohldmann P.E."/>
            <person name="Cook L.L."/>
            <person name="Hickenbotham M.T."/>
            <person name="Eldred J."/>
            <person name="Williams D."/>
            <person name="Bedell J.A."/>
            <person name="Mardis E.R."/>
            <person name="Clifton S.W."/>
            <person name="Chissoe S.L."/>
            <person name="Marra M.A."/>
            <person name="Raymond C."/>
            <person name="Haugen E."/>
            <person name="Gillett W."/>
            <person name="Zhou Y."/>
            <person name="James R."/>
            <person name="Phelps K."/>
            <person name="Iadanoto S."/>
            <person name="Bubb K."/>
            <person name="Simms E."/>
            <person name="Levy R."/>
            <person name="Clendenning J."/>
            <person name="Kaul R."/>
            <person name="Kent W.J."/>
            <person name="Furey T.S."/>
            <person name="Baertsch R.A."/>
            <person name="Brent M.R."/>
            <person name="Keibler E."/>
            <person name="Flicek P."/>
            <person name="Bork P."/>
            <person name="Suyama M."/>
            <person name="Bailey J.A."/>
            <person name="Portnoy M.E."/>
            <person name="Torrents D."/>
            <person name="Chinwalla A.T."/>
            <person name="Gish W.R."/>
            <person name="Eddy S.R."/>
            <person name="McPherson J.D."/>
            <person name="Olson M.V."/>
            <person name="Eichler E.E."/>
            <person name="Green E.D."/>
            <person name="Waterston R.H."/>
            <person name="Wilson R.K."/>
        </authorList>
    </citation>
    <scope>NUCLEOTIDE SEQUENCE [LARGE SCALE GENOMIC DNA]</scope>
</reference>
<reference key="6">
    <citation type="journal article" date="2004" name="Genome Res.">
        <title>The status, quality, and expansion of the NIH full-length cDNA project: the Mammalian Gene Collection (MGC).</title>
        <authorList>
            <consortium name="The MGC Project Team"/>
        </authorList>
    </citation>
    <scope>NUCLEOTIDE SEQUENCE [LARGE SCALE MRNA]</scope>
    <source>
        <tissue>Brain</tissue>
        <tissue>Eye</tissue>
        <tissue>Kidney</tissue>
        <tissue>Muscle</tissue>
        <tissue>Pancreas</tissue>
        <tissue>Placenta</tissue>
        <tissue>Skin</tissue>
    </source>
</reference>
<reference key="7">
    <citation type="journal article" date="2003" name="Nat. Biotechnol.">
        <title>Exploring proteomes and analyzing protein processing by mass spectrometric identification of sorted N-terminal peptides.</title>
        <authorList>
            <person name="Gevaert K."/>
            <person name="Goethals M."/>
            <person name="Martens L."/>
            <person name="Van Damme J."/>
            <person name="Staes A."/>
            <person name="Thomas G.R."/>
            <person name="Vandekerckhove J."/>
        </authorList>
    </citation>
    <scope>PROTEIN SEQUENCE OF 2-28</scope>
    <source>
        <tissue>Platelet</tissue>
    </source>
</reference>
<reference key="8">
    <citation type="submission" date="2005-06" db="UniProtKB">
        <authorList>
            <person name="Bienvenut W.V."/>
        </authorList>
    </citation>
    <scope>PROTEIN SEQUENCE OF 2-18; 29-37; 40-50; 85-95; 148-177; 184-191; 197-206; 292-312 AND 316-326</scope>
    <scope>CLEAVAGE OF INITIATOR METHIONINE</scope>
    <scope>ACETYLATION AT ASP-2</scope>
    <scope>IDENTIFICATION BY MASS SPECTROMETRY</scope>
    <source>
        <tissue>B-cell lymphoma</tissue>
    </source>
</reference>
<reference key="9">
    <citation type="submission" date="2008-12" db="UniProtKB">
        <authorList>
            <person name="Lubec G."/>
            <person name="Afjehi-Sadat L."/>
            <person name="Chen W.-Q."/>
            <person name="Sun Y."/>
        </authorList>
    </citation>
    <scope>PROTEIN SEQUENCE OF 19-62; 85-113; 184-191; 197-206; 216-254; 291-312; 316-326 AND 360-372</scope>
    <scope>IDENTIFICATION BY MASS SPECTROMETRY</scope>
    <source>
        <tissue>Brain</tissue>
        <tissue>Cajal-Retzius cell</tissue>
        <tissue>Fetal brain cortex</tissue>
    </source>
</reference>
<reference key="10">
    <citation type="journal article" date="1983" name="J. Mol. Biol.">
        <title>Complementary DNA sequence of a human cytoplasmic actin. Interspecies divergence of 3' non-coding regions.</title>
        <authorList>
            <person name="Hanukoglu I."/>
            <person name="Tanese N."/>
            <person name="Fuchs E."/>
        </authorList>
    </citation>
    <scope>NUCLEOTIDE SEQUENCE [MRNA] OF 252-375</scope>
</reference>
<reference key="11">
    <citation type="journal article" date="2002" name="J. Biol. Chem.">
        <title>Nuclear DNA helicase II/RNA helicase A binds to filamentous actin.</title>
        <authorList>
            <person name="Zhang S."/>
            <person name="Buder K."/>
            <person name="Burkhardt C."/>
            <person name="Schlott B."/>
            <person name="Goerlach M."/>
            <person name="Grosse F."/>
        </authorList>
    </citation>
    <scope>SUBCELLULAR LOCATION</scope>
    <scope>INTERACTION WITH DHX9</scope>
</reference>
<reference key="12">
    <citation type="journal article" date="2003" name="EMBO J.">
        <title>Exportin 6: a novel nuclear export receptor that is specific for profilin.actin complexes.</title>
        <authorList>
            <person name="Stueven T."/>
            <person name="Hartmann E."/>
            <person name="Goerlich D."/>
        </authorList>
    </citation>
    <scope>IDENTIFICATION IN A COMPLEX WITH RAN; XPO6 AND PFN1</scope>
    <scope>INTERACTION WITH XPO6</scope>
</reference>
<reference key="13">
    <citation type="journal article" date="2003" name="Nature">
        <title>Proteomic characterization of the human centrosome by protein correlation profiling.</title>
        <authorList>
            <person name="Andersen J.S."/>
            <person name="Wilkinson C.J."/>
            <person name="Mayor T."/>
            <person name="Mortensen P."/>
            <person name="Nigg E.A."/>
            <person name="Mann M."/>
        </authorList>
    </citation>
    <scope>IDENTIFICATION BY MASS SPECTROMETRY</scope>
    <source>
        <tissue>Lymphoblast</tissue>
    </source>
</reference>
<reference key="14">
    <citation type="journal article" date="2004" name="PLoS Biol.">
        <title>Emerin caps the pointed end of actin filaments: evidence for an actin cortical network at the nuclear inner membrane.</title>
        <authorList>
            <person name="Holaska J.M."/>
            <person name="Kowalski A.K."/>
            <person name="Wilson K.L."/>
        </authorList>
    </citation>
    <scope>INTERACTION WITH EMD</scope>
</reference>
<reference key="15">
    <citation type="journal article" date="2005" name="Biochem. Biophys. Res. Commun.">
        <title>Proteomic identification of proteins conjugated to ISG15 in mouse and human cells.</title>
        <authorList>
            <person name="Giannakopoulos N.V."/>
            <person name="Luo J.K."/>
            <person name="Papov V."/>
            <person name="Zou W."/>
            <person name="Lenschow D.J."/>
            <person name="Jacobs B.S."/>
            <person name="Borden E.C."/>
            <person name="Li J."/>
            <person name="Virgin H.W."/>
            <person name="Zhang D.E."/>
        </authorList>
    </citation>
    <scope>ISGYLATION</scope>
</reference>
<reference key="16">
    <citation type="journal article" date="2007" name="Blood">
        <title>HGAL, a lymphoma prognostic biomarker, interacts with the cytoskeleton and mediates the effects of IL-6 on cell migration.</title>
        <authorList>
            <person name="Lu X."/>
            <person name="Chen J."/>
            <person name="Malumbres R."/>
            <person name="Cubedo Gil E."/>
            <person name="Helfman D.M."/>
            <person name="Lossos I.S."/>
        </authorList>
    </citation>
    <scope>INTERACTION WITH GCSAM</scope>
</reference>
<reference key="17">
    <citation type="journal article" date="2007" name="Mol. Cell. Proteomics">
        <title>Molecular composition of IMP1 ribonucleoprotein granules.</title>
        <authorList>
            <person name="Joeson L."/>
            <person name="Vikesaa J."/>
            <person name="Krogh A."/>
            <person name="Nielsen L.K."/>
            <person name="Hansen T."/>
            <person name="Borup R."/>
            <person name="Johnsen A.H."/>
            <person name="Christiansen J."/>
            <person name="Nielsen F.C."/>
        </authorList>
    </citation>
    <scope>IDENTIFICATION IN A MRNP GRANULE COMPLEX</scope>
    <scope>IDENTIFICATION BY MASS SPECTROMETRY</scope>
    <scope>SUBCELLULAR LOCATION</scope>
</reference>
<reference key="18">
    <citation type="journal article" date="2008" name="Genes Dev.">
        <title>Regulation of muscle development by DPF3, a novel histone acetylation and methylation reader of the BAF chromatin remodeling complex.</title>
        <authorList>
            <person name="Lange M."/>
            <person name="Kaynak B."/>
            <person name="Forster U.B."/>
            <person name="Toenjes M."/>
            <person name="Fischer J.J."/>
            <person name="Grimm C."/>
            <person name="Schlesinger J."/>
            <person name="Just S."/>
            <person name="Dunkel I."/>
            <person name="Krueger T."/>
            <person name="Mebus S."/>
            <person name="Lehrach H."/>
            <person name="Lurz R."/>
            <person name="Gobom J."/>
            <person name="Rottbauer W."/>
            <person name="Abdelilah-Seyfried S."/>
            <person name="Sperling S."/>
        </authorList>
    </citation>
    <scope>IDENTIFICATION IN THE BAF COMPLEX</scope>
    <scope>IDENTIFICATION BY MASS SPECTROMETRY</scope>
</reference>
<reference key="19">
    <citation type="journal article" date="2008" name="Proc. Natl. Acad. Sci. U.S.A.">
        <title>Connecting actin monomers by iso-peptide bond is a toxicity mechanism of the Vibrio cholerae MARTX toxin.</title>
        <authorList>
            <person name="Kudryashov D.S."/>
            <person name="Durer Z.A."/>
            <person name="Ytterberg A.J."/>
            <person name="Sawaya M.R."/>
            <person name="Pashkov I."/>
            <person name="Prochazkova K."/>
            <person name="Yeates T.O."/>
            <person name="Loo R.R."/>
            <person name="Loo J.A."/>
            <person name="Satchell K.J."/>
            <person name="Reisler E."/>
        </authorList>
    </citation>
    <scope>CROSS-LINK BETWEEN LYS-50 AND GLU-270 BY V.CHOLERAE TOXIN RTXA (MICROBIAL INFECTION)</scope>
</reference>
<reference key="20">
    <citation type="journal article" date="2009" name="Anal. Chem.">
        <title>Lys-N and trypsin cover complementary parts of the phosphoproteome in a refined SCX-based approach.</title>
        <authorList>
            <person name="Gauci S."/>
            <person name="Helbig A.O."/>
            <person name="Slijper M."/>
            <person name="Krijgsveld J."/>
            <person name="Heck A.J."/>
            <person name="Mohammed S."/>
        </authorList>
    </citation>
    <scope>ACETYLATION [LARGE SCALE ANALYSIS] AT ASP-2</scope>
    <scope>CLEAVAGE OF INITIATOR METHIONINE [LARGE SCALE ANALYSIS]</scope>
    <scope>IDENTIFICATION BY MASS SPECTROMETRY [LARGE SCALE ANALYSIS]</scope>
</reference>
<reference key="21">
    <citation type="journal article" date="2009" name="Nature">
        <title>GlcNAcylation of a histone methyltransferase in retinoic-acid-induced granulopoiesis.</title>
        <authorList>
            <person name="Fujiki R."/>
            <person name="Chikanishi T."/>
            <person name="Hashiba W."/>
            <person name="Ito H."/>
            <person name="Takada I."/>
            <person name="Roeder R.G."/>
            <person name="Kitagawa H."/>
            <person name="Kato S."/>
        </authorList>
    </citation>
    <scope>RETRACTED PAPER</scope>
</reference>
<reference key="22">
    <citation type="journal article" date="2014" name="Nature">
        <title>Retraction: GlcNAcylation of a histone methyltransferase in retinoic-acid-induced granulopoiesis.</title>
        <authorList>
            <person name="Fujiki R."/>
            <person name="Chikanishi T."/>
            <person name="Hashiba W."/>
            <person name="Ito H."/>
            <person name="Takada I."/>
            <person name="Roeder R.G."/>
            <person name="Kitagawa H."/>
            <person name="Kato S."/>
        </authorList>
    </citation>
    <scope>RETRACTION NOTICE OF PUBMED:19377461</scope>
</reference>
<reference key="23">
    <citation type="journal article" date="2011" name="Proc. Natl. Acad. Sci. U.S.A.">
        <title>Tumor suppressor down-regulated in renal cell carcinoma 1 (DRR1) is a stress-induced actin bundling factor that modulates synaptic efficacy and cognition.</title>
        <authorList>
            <person name="Schmidt M.V."/>
            <person name="Schuelke J.P."/>
            <person name="Liebl C."/>
            <person name="Stiess M."/>
            <person name="Avrabos C."/>
            <person name="Bock J."/>
            <person name="Wochnik G.M."/>
            <person name="Davies H.A."/>
            <person name="Zimmermann N."/>
            <person name="Scharf S.H."/>
            <person name="Truembach D."/>
            <person name="Wurst W."/>
            <person name="Zieglgaensberger W."/>
            <person name="Turck C."/>
            <person name="Holsboer F."/>
            <person name="Stewart M.G."/>
            <person name="Bradke F."/>
            <person name="Eder M."/>
            <person name="Mueller M.B."/>
            <person name="Rein T."/>
        </authorList>
    </citation>
    <scope>INTERACTION WITH FAM107A</scope>
</reference>
<reference key="24">
    <citation type="journal article" date="2012" name="Mol. Cell. Proteomics">
        <title>Comparative large-scale characterisation of plant vs. mammal proteins reveals similar and idiosyncratic N-alpha acetylation features.</title>
        <authorList>
            <person name="Bienvenut W.V."/>
            <person name="Sumpton D."/>
            <person name="Martinez A."/>
            <person name="Lilla S."/>
            <person name="Espagne C."/>
            <person name="Meinnel T."/>
            <person name="Giglione C."/>
        </authorList>
    </citation>
    <scope>ACETYLATION [LARGE SCALE ANALYSIS] AT ASP-2</scope>
    <scope>CLEAVAGE OF INITIATOR METHIONINE [LARGE SCALE ANALYSIS]</scope>
    <scope>IDENTIFICATION BY MASS SPECTROMETRY [LARGE SCALE ANALYSIS]</scope>
</reference>
<reference key="25">
    <citation type="journal article" date="2012" name="Proc. Natl. Acad. Sci. U.S.A.">
        <title>N-terminal acetylome analyses and functional insights of the N-terminal acetyltransferase NatB.</title>
        <authorList>
            <person name="Van Damme P."/>
            <person name="Lasa M."/>
            <person name="Polevoda B."/>
            <person name="Gazquez C."/>
            <person name="Elosegui-Artola A."/>
            <person name="Kim D.S."/>
            <person name="De Juan-Pardo E."/>
            <person name="Demeyer K."/>
            <person name="Hole K."/>
            <person name="Larrea E."/>
            <person name="Timmerman E."/>
            <person name="Prieto J."/>
            <person name="Arnesen T."/>
            <person name="Sherman F."/>
            <person name="Gevaert K."/>
            <person name="Aldabe R."/>
        </authorList>
    </citation>
    <scope>ACETYLATION [LARGE SCALE ANALYSIS] AT MET-1 AND ASP-2</scope>
    <scope>CLEAVAGE OF INITIATOR METHIONINE [LARGE SCALE ANALYSIS]</scope>
    <scope>IDENTIFICATION BY MASS SPECTROMETRY [LARGE SCALE ANALYSIS]</scope>
</reference>
<reference key="26">
    <citation type="journal article" date="2011" name="Cancer Res.">
        <title>Nuclear ErbB2 enhances translation and cell growth by activating transcription of ribosomal RNA genes.</title>
        <authorList>
            <person name="Li L.Y."/>
            <person name="Chen H."/>
            <person name="Hsieh Y.H."/>
            <person name="Wang Y.N."/>
            <person name="Chu H.J."/>
            <person name="Chen Y.H."/>
            <person name="Chen H.Y."/>
            <person name="Chien P.J."/>
            <person name="Ma H.T."/>
            <person name="Tsai H.C."/>
            <person name="Lai C.C."/>
            <person name="Sher Y.P."/>
            <person name="Lien H.C."/>
            <person name="Tsai C.H."/>
            <person name="Hung M.C."/>
        </authorList>
    </citation>
    <scope>INTERACTION WITH ERBB2</scope>
</reference>
<reference key="27">
    <citation type="journal article" date="2013" name="Nat. Commun.">
        <title>ALKBH4-dependent demethylation of actin regulates actomyosin dynamics.</title>
        <authorList>
            <person name="Li M.M."/>
            <person name="Nilsen A."/>
            <person name="Shi Y."/>
            <person name="Fusser M."/>
            <person name="Ding Y.H."/>
            <person name="Fu Y."/>
            <person name="Liu B."/>
            <person name="Niu Y."/>
            <person name="Wu Y.S."/>
            <person name="Huang C.M."/>
            <person name="Olofsson M."/>
            <person name="Jin K.X."/>
            <person name="Lv Y."/>
            <person name="Xu X.Z."/>
            <person name="He C."/>
            <person name="Dong M.Q."/>
            <person name="Rendtlew Danielsen J.M."/>
            <person name="Klungland A."/>
            <person name="Yang Y.G."/>
        </authorList>
    </citation>
    <scope>METHYLATION AT LYS-84</scope>
    <scope>DEMETHYLATION BY ALKBH4</scope>
</reference>
<reference key="28">
    <citation type="journal article" date="2015" name="Proteomics">
        <title>N-terminome analysis of the human mitochondrial proteome.</title>
        <authorList>
            <person name="Vaca Jacome A.S."/>
            <person name="Rabilloud T."/>
            <person name="Schaeffer-Reiss C."/>
            <person name="Rompais M."/>
            <person name="Ayoub D."/>
            <person name="Lane L."/>
            <person name="Bairoch A."/>
            <person name="Van Dorsselaer A."/>
            <person name="Carapito C."/>
        </authorList>
    </citation>
    <scope>ACETYLATION [LARGE SCALE ANALYSIS] AT ASP-2</scope>
    <scope>CLEAVAGE OF INITIATOR METHIONINE [LARGE SCALE ANALYSIS]</scope>
    <scope>IDENTIFICATION BY MASS SPECTROMETRY [LARGE SCALE ANALYSIS]</scope>
</reference>
<reference key="29">
    <citation type="journal article" date="2015" name="Science">
        <title>ACD toxin-produced actin oligomers poison formin-controlled actin polymerization.</title>
        <authorList>
            <person name="Heisler D.B."/>
            <person name="Kudryashova E."/>
            <person name="Grinevich D.O."/>
            <person name="Suarez C."/>
            <person name="Winkelman J.D."/>
            <person name="Birukov K.G."/>
            <person name="Kotha S.R."/>
            <person name="Parinandi N.L."/>
            <person name="Vavylonis D."/>
            <person name="Kovar D.R."/>
            <person name="Kudryashov D.S."/>
        </authorList>
    </citation>
    <scope>CROSS-LINK BY V.CHOLERAE TOXIN RTXA (MICROBIAL INFECTION)</scope>
</reference>
<reference key="30">
    <citation type="journal article" date="2017" name="Oncogene">
        <title>A novel nuclear complex of DRR1, F-actin and COMMD1 involved in NF-kappaB degradation and cell growth suppression in neuroblastoma.</title>
        <authorList>
            <person name="Mu P."/>
            <person name="Akashi T."/>
            <person name="Lu F."/>
            <person name="Kishida S."/>
            <person name="Kadomatsu K."/>
        </authorList>
    </citation>
    <scope>INTERACTION WITH FAM107A</scope>
</reference>
<reference key="31">
    <citation type="journal article" date="2018" name="FEBS J.">
        <title>NAT6 acetylates the N-terminus of different forms of actin.</title>
        <authorList>
            <person name="Wiame E."/>
            <person name="Tahay G."/>
            <person name="Tyteca D."/>
            <person name="Vertommen D."/>
            <person name="Stroobant V."/>
            <person name="Bommer G.T."/>
            <person name="Van Schaftingen E."/>
        </authorList>
    </citation>
    <scope>ACETYLATION AT ASP-2</scope>
</reference>
<reference key="32">
    <citation type="journal article" date="2018" name="Nature">
        <title>Nuclear ARP2/3 drives DNA break clustering for homology-directed repair.</title>
        <authorList>
            <person name="Schrank B.R."/>
            <person name="Aparicio T."/>
            <person name="Li Y."/>
            <person name="Chang W."/>
            <person name="Chait B.T."/>
            <person name="Gundersen G.G."/>
            <person name="Gottesman M.E."/>
            <person name="Gautier J."/>
        </authorList>
    </citation>
    <scope>FUNCTION</scope>
    <scope>SUBCELLULAR LOCATION</scope>
</reference>
<reference key="33">
    <citation type="journal article" date="2018" name="Proc. Natl. Acad. Sci. U.S.A.">
        <title>NAA80 is actin's N-terminal acetyltransferase and regulates cytoskeleton assembly and cell motility.</title>
        <authorList>
            <person name="Drazic A."/>
            <person name="Aksnes H."/>
            <person name="Marie M."/>
            <person name="Boczkowska M."/>
            <person name="Varland S."/>
            <person name="Timmerman E."/>
            <person name="Foyn H."/>
            <person name="Glomnes N."/>
            <person name="Rebowski G."/>
            <person name="Impens F."/>
            <person name="Gevaert K."/>
            <person name="Dominguez R."/>
            <person name="Arnesen T."/>
        </authorList>
    </citation>
    <scope>FUNCTION</scope>
    <scope>ACETYLATION AT ASP-2</scope>
</reference>
<reference key="34">
    <citation type="journal article" date="2018" name="Elife">
        <title>SETD3 protein is the actin-specific histidine N-methyltransferase.</title>
        <authorList>
            <person name="Kwiatkowski S."/>
            <person name="Seliga A.K."/>
            <person name="Vertommen D."/>
            <person name="Terreri M."/>
            <person name="Ishikawa T."/>
            <person name="Grabowska I."/>
            <person name="Tiebe M."/>
            <person name="Teleman A.A."/>
            <person name="Jagielski A.K."/>
            <person name="Veiga-da-Cunha M."/>
            <person name="Drozak J."/>
        </authorList>
    </citation>
    <scope>METHYLATION AT HIS-73</scope>
</reference>
<reference key="35">
    <citation type="journal article" date="2018" name="Sci. Rep.">
        <title>The MICALs are a Family of F-actin Dismantling Oxidoreductases Conserved from Drosophila to Humans.</title>
        <authorList>
            <person name="Wu H."/>
            <person name="Yesilyurt H.G."/>
            <person name="Yoon J."/>
            <person name="Terman J.R."/>
        </authorList>
    </citation>
    <scope>OXIDATION AT MET-44 AND MET-47</scope>
</reference>
<reference key="36">
    <citation type="journal article" date="2022" name="Science">
        <title>Actin maturation requires the ACTMAP/C19orf54 protease.</title>
        <authorList>
            <person name="Haahr P."/>
            <person name="Galli R.A."/>
            <person name="van den Hengel L.G."/>
            <person name="Bleijerveld O.B."/>
            <person name="Kazokaite-Adomaitiene J."/>
            <person name="Song J.Y."/>
            <person name="Kroese L.J."/>
            <person name="Krimpenfort P."/>
            <person name="Baltissen M.P."/>
            <person name="Vermeulen M."/>
            <person name="Ottenheijm C.A.C."/>
            <person name="Brummelkamp T.R."/>
        </authorList>
    </citation>
    <scope>PROTEOLYTIC CLEAVAGE BY ACTMAP</scope>
    <scope>CLEAVAGE OF INITIATOR METHIONINE</scope>
    <scope>ACETYLATION AT MET-1</scope>
</reference>
<reference key="37">
    <citation type="journal article" date="2019" name="Elife">
        <title>Structural insights into SETD3-mediated histidine methylation on beta-actin.</title>
        <authorList>
            <person name="Guo Q."/>
            <person name="Liao S."/>
            <person name="Kwiatkowski S."/>
            <person name="Tomaka W."/>
            <person name="Yu H."/>
            <person name="Wu G."/>
            <person name="Tu X."/>
            <person name="Min J."/>
            <person name="Drozak J."/>
            <person name="Xu C."/>
        </authorList>
    </citation>
    <scope>X-RAY CRYSTALLOGRAPHY (1.95 ANGSTROMS) OF 66-88 IN COMPLEX WITH SETD3</scope>
    <scope>METHYLATION AT HIS-73</scope>
    <scope>MUTAGENESIS OF TYR-69; ILE-71; HIS-73; ASP-80; ASP-81 AND MET-82</scope>
</reference>
<reference key="38">
    <citation type="journal article" date="2019" name="Nature">
        <title>SETD3 is an actin histidine methyltransferase that prevents primary dystocia.</title>
        <authorList>
            <person name="Wilkinson A.W."/>
            <person name="Diep J."/>
            <person name="Dai S."/>
            <person name="Liu S."/>
            <person name="Ooi Y.S."/>
            <person name="Song D."/>
            <person name="Li T.M."/>
            <person name="Horton J.R."/>
            <person name="Zhang X."/>
            <person name="Liu C."/>
            <person name="Trivedi D.V."/>
            <person name="Ruppel K.M."/>
            <person name="Vilches-Moure J.G."/>
            <person name="Casey K.M."/>
            <person name="Mak J."/>
            <person name="Cowan T."/>
            <person name="Elias J.E."/>
            <person name="Nagamine C.M."/>
            <person name="Spudich J.A."/>
            <person name="Cheng X."/>
            <person name="Carette J.E."/>
            <person name="Gozani O."/>
        </authorList>
    </citation>
    <scope>X-RAY CRYSTALLOGRAPHY (1.69 ANGSTROMS) OF 67-75 IN COMPLEX WITH SETD3</scope>
    <scope>METHYLATION AT HIS-73</scope>
    <scope>MUTAGENESIS OF ILE-71; GLY-74 AND TRP-79</scope>
</reference>
<reference evidence="47 48 49 50 51 52" key="39">
    <citation type="journal article" date="2019" name="Nat. Commun.">
        <title>Structural basis for the target specificity of actin histidine methyltransferase SETD3.</title>
        <authorList>
            <person name="Dai S."/>
            <person name="Horton J.R."/>
            <person name="Woodcock C.B."/>
            <person name="Wilkinson A.W."/>
            <person name="Zhang X."/>
            <person name="Gozani O."/>
            <person name="Cheng X."/>
        </authorList>
    </citation>
    <scope>X-RAY CRYSTALLOGRAPHY (1.75 ANGSTROMS) OF 66-80 IN COMPLEX WITH SETD3</scope>
    <scope>METHYLATION AT HIS-73</scope>
    <scope>MUTAGENESIS OF HIS-73</scope>
</reference>
<reference evidence="55 56" key="40">
    <citation type="journal article" date="2020" name="J. Biol. Chem.">
        <title>Characterization of SETD3 methyltransferase-mediated protein methionine methylation.</title>
        <authorList>
            <person name="Dai S."/>
            <person name="Holt M.V."/>
            <person name="Horton J.R."/>
            <person name="Woodcock C.B."/>
            <person name="Patel A."/>
            <person name="Zhang X."/>
            <person name="Young N.L."/>
            <person name="Wilkinson A.W."/>
            <person name="Cheng X."/>
        </authorList>
    </citation>
    <scope>X-RAY CRYSTALLOGRAPHY (1.76 ANGSTROMS) OF 66-88 IN COMPLEX WITH SETD3</scope>
    <scope>MUTAGENESIS OF HIS-73</scope>
</reference>
<reference evidence="53 54" key="41">
    <citation type="journal article" date="2020" name="J. Biol. Chem.">
        <title>An engineered variant of SETD3 methyltransferase alters target specificity from histidine to lysine methylation.</title>
        <authorList>
            <person name="Dai S."/>
            <person name="Horton J.R."/>
            <person name="Wilkinson A.W."/>
            <person name="Gozani O."/>
            <person name="Zhang X."/>
            <person name="Cheng X."/>
        </authorList>
    </citation>
    <scope>X-RAY CRYSTALLOGRAPHY (2.02 ANGSTROMS) OF 66-88 IN COMPLEX WITH SETD3</scope>
</reference>
<reference evidence="57" key="42">
    <citation type="journal article" date="2024" name="Dev. Cell">
        <title>CDK5RAP2 activates microtubule nucleator gammaTuRC by facilitating template formation and actin release.</title>
        <authorList>
            <person name="Serna M."/>
            <person name="Zimmermann F."/>
            <person name="Vineethakumari C."/>
            <person name="Gonzalez-Rodriguez N."/>
            <person name="Llorca O."/>
            <person name="Luders J."/>
        </authorList>
    </citation>
    <scope>STRUCTURE BY ELECTRON MICROSCOPY (3.57 ANGSTROMS) IN COMPLEX WITH MZT1; MZT2A; CDK5RAP2 AND THE GAMMA-TUBULIN RING COMPLEX</scope>
    <scope>FUNCTION</scope>
    <scope>SUBUNIT</scope>
</reference>
<reference evidence="58 59 60" key="43">
    <citation type="journal article" date="2024" name="Nat. Struct. Mol. Biol.">
        <title>Structure of the gamma-tubulin ring complex-capped microtubule.</title>
        <authorList>
            <person name="Aher A."/>
            <person name="Urnavicius L."/>
            <person name="Xue A."/>
            <person name="Neselu K."/>
            <person name="Kapoor T.M."/>
        </authorList>
    </citation>
    <scope>STRUCTURE BY ELECTRON MICROSCOPY (7.00 ANGSTROMS) IN COMPLEXES WITH MZT1; TUBA1B; TUBB3 AND THE GAMMA-TUBULIN RING COMPLEX</scope>
    <scope>FUNCTION</scope>
    <scope>SUBUNIT</scope>
</reference>
<reference key="44">
    <citation type="journal article" date="1999" name="Proc. Natl. Acad. Sci. U.S.A.">
        <title>A heterozygous mutation of beta-actin associated with neutrophil dysfunction and recurrent infection.</title>
        <authorList>
            <person name="Nunoi H."/>
            <person name="Yamazaki T."/>
            <person name="Tsuchiya H."/>
            <person name="Kato S."/>
            <person name="Malech H.L."/>
            <person name="Matsuda I."/>
            <person name="Kanegasaki S."/>
        </authorList>
    </citation>
    <scope>VARIANT THC8 LYS-364</scope>
    <scope>INVOLVEMENT IN THC8</scope>
    <scope>INTERACTION WITH PFN1</scope>
</reference>
<reference key="45">
    <citation type="journal article" date="2006" name="Am. J. Hum. Genet.">
        <title>A mutation of beta -actin that alters depolymerization dynamics is associated with autosomal dominant developmental malformations, deafness, and dystonia.</title>
        <authorList>
            <person name="Procaccio V."/>
            <person name="Salazar G."/>
            <person name="Ono S."/>
            <person name="Styers M.L."/>
            <person name="Gearing M."/>
            <person name="Davila A."/>
            <person name="Jimenez R."/>
            <person name="Juncos J."/>
            <person name="Gutekunst C.-A."/>
            <person name="Meroni G."/>
            <person name="Fontanella B."/>
            <person name="Sontag E."/>
            <person name="Sontag J.-M."/>
            <person name="Faundez V."/>
            <person name="Wainer B.H."/>
        </authorList>
    </citation>
    <scope>VARIANT DDS1 TRP-183</scope>
    <scope>CHARACTERIZATION OF VARIANT DDS1 TRP-183</scope>
</reference>
<reference key="46">
    <citation type="journal article" date="2012" name="Nat. Genet.">
        <title>De novo mutations in the actin genes ACTB and ACTG1 cause Baraitser-Winter syndrome.</title>
        <authorList>
            <person name="Riviere J.B."/>
            <person name="van Bon B.W."/>
            <person name="Hoischen A."/>
            <person name="Kholmanskikh S.S."/>
            <person name="O'Roak B.J."/>
            <person name="Gilissen C."/>
            <person name="Gijsen S."/>
            <person name="Sullivan C.T."/>
            <person name="Christian S.L."/>
            <person name="Abdul-Rahman O.A."/>
            <person name="Atkin J.F."/>
            <person name="Chassaing N."/>
            <person name="Drouin-Garraud V."/>
            <person name="Fry A.E."/>
            <person name="Fryns J.P."/>
            <person name="Gripp K.W."/>
            <person name="Kempers M."/>
            <person name="Kleefstra T."/>
            <person name="Mancini G.M."/>
            <person name="Nowaczyk M.J."/>
            <person name="van Ravenswaaij-Arts C.M."/>
            <person name="Roscioli T."/>
            <person name="Marble M."/>
            <person name="Rosenfeld J.A."/>
            <person name="Siu V.M."/>
            <person name="de Vries B.B."/>
            <person name="Shendure J."/>
            <person name="Verloes A."/>
            <person name="Veltman J.A."/>
            <person name="Brunner H.G."/>
            <person name="Ross M.E."/>
            <person name="Pilz D.T."/>
            <person name="Dobyns W.B."/>
        </authorList>
    </citation>
    <scope>VARIANTS BRWS1 ASP-12; VAL-65; CYS-196 AND HIS-196</scope>
</reference>
<reference key="47">
    <citation type="journal article" date="2014" name="FEBS J.">
        <title>Molecular mechanisms of disease-related human beta-actin mutations p.R183W and p.E364K.</title>
        <authorList>
            <person name="Hundt N."/>
            <person name="Preller M."/>
            <person name="Swolski O."/>
            <person name="Ang A.M."/>
            <person name="Mannherz H.G."/>
            <person name="Manstein D.J."/>
            <person name="Mueller M."/>
        </authorList>
    </citation>
    <scope>CHARACTERIZATION OF VARIANT DDS1 TRP-183</scope>
    <scope>CHARACTERIZATION OF VARIANT THC8 LYS-364</scope>
    <scope>CATALYTIC ACTIVITY</scope>
    <scope>FUNCTION</scope>
    <scope>INTERACTION WITH PFN1</scope>
</reference>
<reference key="48">
    <citation type="journal article" date="2017" name="Case Rep. Genet.">
        <title>Pathogenic Variant in ACTB, p.Arg183Trp, Causes Juvenile-Onset Dystonia, Hearing Loss, and Developmental Delay without Midline Malformation.</title>
        <authorList>
            <person name="Conboy E."/>
            <person name="Vairo F."/>
            <person name="Waggoner D."/>
            <person name="Ober C."/>
            <person name="Das S."/>
            <person name="Dhamija R."/>
            <person name="Klee E.W."/>
            <person name="Pichurin P."/>
        </authorList>
    </citation>
    <scope>VARIANT DDS1 TRP-183</scope>
</reference>
<reference key="49">
    <citation type="journal article" date="2017" name="J. Invest. Dermatol.">
        <title>Postzygotic Mutations in Beta-Actin Are Associated with Becker's Nevus and Becker's Nevus Syndrome.</title>
        <authorList>
            <person name="Cai E.D."/>
            <person name="Sun B.K."/>
            <person name="Chiang A."/>
            <person name="Rogers A."/>
            <person name="Bernet L."/>
            <person name="Cheng B."/>
            <person name="Teng J."/>
            <person name="Rieger K.E."/>
            <person name="Sarin K.Y."/>
        </authorList>
    </citation>
    <scope>VARIANT BNS CYS-147</scope>
    <scope>VARIANT SER-147</scope>
    <scope>INVOLVEMENT IN BNS</scope>
</reference>
<reference key="50">
    <citation type="journal article" date="2018" name="J. Neurodev. Disord.">
        <title>Dystonia-deafness syndrome caused by ACTB p.Arg183Trp heterozygosity shows striatal dopaminergic dysfunction and response to pallidal stimulation.</title>
        <authorList>
            <person name="Skogseid I.M."/>
            <person name="Roesby O."/>
            <person name="Konglund A."/>
            <person name="Connelly J.P."/>
            <person name="Nedregaard B."/>
            <person name="Jablonski G.E."/>
            <person name="Kvernmo N."/>
            <person name="Stray-Pedersen A."/>
            <person name="Glover J.C."/>
        </authorList>
    </citation>
    <scope>VARIANT DDS1 TRP-183</scope>
</reference>
<reference key="51">
    <citation type="journal article" date="2018" name="Nat. Commun.">
        <title>Variants in exons 5 and 6 of ACTB cause syndromic thrombocytopenia.</title>
        <authorList>
            <person name="Latham S.L."/>
            <person name="Ehmke N."/>
            <person name="Reinke P.Y.A."/>
            <person name="Taft M.H."/>
            <person name="Eicke D."/>
            <person name="Reindl T."/>
            <person name="Stenzel W."/>
            <person name="Lyons M.J."/>
            <person name="Friez M.J."/>
            <person name="Lee J.A."/>
            <person name="Hecker R."/>
            <person name="Fruehwald M.C."/>
            <person name="Becker K."/>
            <person name="Neuhann T.M."/>
            <person name="Horn D."/>
            <person name="Schrock E."/>
            <person name="Niehaus I."/>
            <person name="Sarnow K."/>
            <person name="Gruetzmann K."/>
            <person name="Gawehn L."/>
            <person name="Klink B."/>
            <person name="Rump A."/>
            <person name="Chaponnier C."/>
            <person name="Figueiredo C."/>
            <person name="Knoefler R."/>
            <person name="Manstein D.J."/>
            <person name="Di Donato N."/>
        </authorList>
    </citation>
    <scope>VARIANTS THC8 ARG-313 AND 338-SER--ILE-341 DEL</scope>
    <scope>INVOLVEMENT IN THC8</scope>
</reference>
<reference key="52">
    <citation type="journal article" date="2018" name="Nat. Commun.">
        <authorList>
            <person name="Latham S.L."/>
            <person name="Ehmke N."/>
            <person name="Reinke P.Y.A."/>
            <person name="Taft M.H."/>
            <person name="Eicke D."/>
            <person name="Reindl T."/>
            <person name="Stenzel W."/>
            <person name="Lyons M.J."/>
            <person name="Friez M.J."/>
            <person name="Lee J.A."/>
            <person name="Hecker R."/>
            <person name="Fruehwald M.C."/>
            <person name="Becker K."/>
            <person name="Neuhann T.M."/>
            <person name="Horn D."/>
            <person name="Schrock E."/>
            <person name="Niehaus I."/>
            <person name="Sarnow K."/>
            <person name="Gruetzmann K."/>
            <person name="Gawehn L."/>
            <person name="Klink B."/>
            <person name="Rump A."/>
            <person name="Chaponnier C."/>
            <person name="Figueiredo C."/>
            <person name="Knoefler R."/>
            <person name="Manstein D.J."/>
            <person name="Di Donato N."/>
        </authorList>
    </citation>
    <scope>ERRATUM OF PUBMED:30315159</scope>
</reference>
<reference key="53">
    <citation type="journal article" date="2019" name="Mol. Syndromol.">
        <title>Could Dissimilar Phenotypic Effects of ACTB Missense Mutations Reflect the Actin Conformational Change? Two Novel Mutations and Literature Review.</title>
        <authorList>
            <person name="Sandestig A."/>
            <person name="Green A."/>
            <person name="Jonasson J."/>
            <person name="Vogt H."/>
            <person name="Wahlstroem J."/>
            <person name="Pepler A."/>
            <person name="Ellnebo K."/>
            <person name="Biskup S."/>
            <person name="Stefanova M."/>
        </authorList>
    </citation>
    <scope>VARIANT BRWS1 ALA-70</scope>
    <scope>VARIANT THC8 PHE-171</scope>
</reference>
<reference key="54">
    <citation type="journal article" date="2020" name="J. Cutan. Pathol.">
        <title>Post-zygotic ACTB mutations underlie congenital smooth muscle hamartomas.</title>
        <authorList>
            <person name="Atzmony L."/>
            <person name="Ugwu N."/>
            <person name="Zaki T.D."/>
            <person name="Antaya R.J."/>
            <person name="Choate K.A."/>
        </authorList>
    </citation>
    <scope>VARIANTS CSMH ASP-111; HIS-137; ALA-146; VAL-146; ASP-146; SER-146; SER-147 AND CYS-147</scope>
    <scope>INVOLVEMENT IN CSMH</scope>
</reference>
<reference key="55">
    <citation type="journal article" date="2022" name="Mov. Disord. Clin. Pract.">
        <title>Dystonia-Deafness Syndrome: ACTB Pathogenic Variant in an Argentinean Family.</title>
        <authorList>
            <person name="Zavala L."/>
            <person name="Ziegler G."/>
            <person name="Moron D.G."/>
            <person name="Garretto N."/>
        </authorList>
    </citation>
    <scope>VARIANT DDS1 TRP-183</scope>
</reference>
<feature type="chain" id="PRO_0000367073" description="Actin, cytoplasmic 1">
    <location>
        <begin position="1"/>
        <end position="375"/>
    </location>
</feature>
<feature type="initiator methionine" description="Removed; alternate" evidence="7 39 42 61 62 63 64">
    <location>
        <position position="1"/>
    </location>
</feature>
<feature type="chain" id="PRO_0000000771" description="Actin, cytoplasmic 1, N-terminally processed" evidence="46">
    <location>
        <begin position="2"/>
        <end position="375"/>
    </location>
</feature>
<feature type="modified residue" description="N-acetylmethionine" evidence="39 63">
    <location>
        <position position="1"/>
    </location>
</feature>
<feature type="modified residue" description="N-acetylaspartate; in Actin, cytoplasmic 1, N-terminally processed" evidence="26 29 42 61 62 63 64">
    <location>
        <position position="2"/>
    </location>
</feature>
<feature type="modified residue" description="Methionine (R)-sulfoxide" evidence="25">
    <location>
        <position position="44"/>
    </location>
</feature>
<feature type="modified residue" description="Methionine (R)-sulfoxide" evidence="25">
    <location>
        <position position="47"/>
    </location>
</feature>
<feature type="modified residue" description="Tele-methylhistidine" evidence="31 32 34 35 37">
    <location>
        <position position="73"/>
    </location>
</feature>
<feature type="modified residue" description="N6-methyllysine" evidence="19">
    <location>
        <position position="84"/>
    </location>
</feature>
<feature type="cross-link" description="(Microbial infection) Isoglutamyl lysine isopeptide (Lys-Glu) (interchain with E-270); by Vibrio toxins RtxA and VgrG1" evidence="44">
    <location>
        <position position="50"/>
    </location>
</feature>
<feature type="cross-link" description="(Microbial infection) Isoglutamyl lysine isopeptide (Glu-Lys) (interchain with K-50); by Vibrio toxins RtxA and VgrG1" evidence="44">
    <location>
        <position position="270"/>
    </location>
</feature>
<feature type="sequence variant" id="VAR_067810" description="In BRWS1; dbSNP:rs281875331." evidence="18">
    <original>N</original>
    <variation>D</variation>
    <location>
        <position position="12"/>
    </location>
</feature>
<feature type="sequence variant" id="VAR_067811" description="In BRWS1; dbSNP:rs281875332." evidence="18">
    <original>L</original>
    <variation>V</variation>
    <location>
        <position position="65"/>
    </location>
</feature>
<feature type="sequence variant" id="VAR_088861" description="In BRWS1; likely pathogenic." evidence="33">
    <original>P</original>
    <variation>A</variation>
    <location>
        <position position="70"/>
    </location>
</feature>
<feature type="sequence variant" id="VAR_088862" description="In CSMH; uncertain significance; somatic variant." evidence="36">
    <original>N</original>
    <variation>D</variation>
    <location>
        <position position="111"/>
    </location>
</feature>
<feature type="sequence variant" id="VAR_088863" description="In CSMH; uncertain significance; somatic variant." evidence="36">
    <original>Q</original>
    <variation>H</variation>
    <location>
        <position position="137"/>
    </location>
</feature>
<feature type="sequence variant" id="VAR_088864" description="In CSMH; somatic variant." evidence="36">
    <original>G</original>
    <variation>A</variation>
    <location>
        <position position="146"/>
    </location>
</feature>
<feature type="sequence variant" id="VAR_088865" description="In CSMH; somatic variant." evidence="36">
    <original>G</original>
    <variation>D</variation>
    <location>
        <position position="146"/>
    </location>
</feature>
<feature type="sequence variant" id="VAR_088866" description="In CSMH; somatic variant." evidence="36">
    <original>G</original>
    <variation>S</variation>
    <location>
        <position position="146"/>
    </location>
</feature>
<feature type="sequence variant" id="VAR_088867" description="In CSMH; somatic variant." evidence="36">
    <original>G</original>
    <variation>V</variation>
    <location>
        <position position="146"/>
    </location>
</feature>
<feature type="sequence variant" id="VAR_088868" description="In BNS and CSMH; also found in isolated non-syndromic Becker nevi; somatic variant." evidence="22 36">
    <original>R</original>
    <variation>C</variation>
    <location>
        <position position="147"/>
    </location>
</feature>
<feature type="sequence variant" id="VAR_088869" description="In CSMH; also found in isolated non-syndromic Becker nevi; somatic variant." evidence="22 36">
    <original>R</original>
    <variation>S</variation>
    <location>
        <position position="147"/>
    </location>
</feature>
<feature type="sequence variant" id="VAR_088870" description="In THC8; likely pathogenic." evidence="33">
    <original>L</original>
    <variation>F</variation>
    <location>
        <position position="171"/>
    </location>
</feature>
<feature type="sequence variant" id="VAR_030026" description="In DDS1; likely pathogenic; results in reduced actin polymerization rate and increased depolymerization; results in higher ATP hydrolysis compared to the wild type; does not affect thermal stability; modifies cell response to latrunculin A; dbSNP:rs104894003." evidence="11 21 23 27 38">
    <original>R</original>
    <variation>W</variation>
    <location>
        <position position="183"/>
    </location>
</feature>
<feature type="sequence variant" id="VAR_067812" description="In BRWS1; dbSNP:rs281875333." evidence="18">
    <original>R</original>
    <variation>C</variation>
    <location>
        <position position="196"/>
    </location>
</feature>
<feature type="sequence variant" id="VAR_067813" description="In BRWS1; dbSNP:rs281875334." evidence="18">
    <original>R</original>
    <variation>H</variation>
    <location>
        <position position="196"/>
    </location>
</feature>
<feature type="sequence variant" id="VAR_048185" description="In dbSNP:rs11546899.">
    <original>P</original>
    <variation>L</variation>
    <location>
        <position position="243"/>
    </location>
</feature>
<feature type="sequence variant" id="VAR_088871" description="In THC8; uncertain significance." evidence="30">
    <original>M</original>
    <variation>R</variation>
    <location>
        <position position="313"/>
    </location>
</feature>
<feature type="sequence variant" id="VAR_088872" description="In THC8; likely pathogenic." evidence="30">
    <location>
        <begin position="338"/>
        <end position="341"/>
    </location>
</feature>
<feature type="sequence variant" id="VAR_088873" description="In THC8; uncertain significance; results in reduced actin polymerization rate without affecting depolymerization; has no effect on ATP hydrolysis rate; does not affect thermal stability." evidence="5 21">
    <original>E</original>
    <variation>K</variation>
    <location>
        <position position="364"/>
    </location>
</feature>
<feature type="mutagenesis site" description="Decreased interaction with SETD3." evidence="34">
    <original>Y</original>
    <variation>A</variation>
    <location>
        <position position="69"/>
    </location>
</feature>
<feature type="mutagenesis site" description="Decreased interaction with SETD3." evidence="34">
    <original>I</original>
    <variation>A</variation>
    <location>
        <position position="71"/>
    </location>
</feature>
<feature type="mutagenesis site" description="Impaired methylation by SETD3." evidence="32">
    <original>I</original>
    <variation>A</variation>
    <location>
        <position position="71"/>
    </location>
</feature>
<feature type="mutagenesis site" description="Abolished methylation by SETD3." evidence="34">
    <original>H</original>
    <variation>A</variation>
    <location>
        <position position="73"/>
    </location>
</feature>
<feature type="mutagenesis site" description="Weak methylation by a A-256 or V-256 SETD3 mutant. High methylation by a F-256 and A-274 SETD3 mutant." evidence="35 37">
    <original>H</original>
    <variation>K</variation>
    <location>
        <position position="73"/>
    </location>
</feature>
<feature type="mutagenesis site" description="Impaired methylation by SETD3." evidence="32">
    <original>G</original>
    <variation>A</variation>
    <location>
        <position position="74"/>
    </location>
</feature>
<feature type="mutagenesis site" description="Does not affect methylation by SETD3." evidence="32">
    <original>W</original>
    <variation>E</variation>
    <location>
        <position position="79"/>
    </location>
</feature>
<feature type="mutagenesis site" description="Decreased interaction with SETD3." evidence="34">
    <original>D</original>
    <variation>A</variation>
    <location>
        <position position="80"/>
    </location>
</feature>
<feature type="mutagenesis site" description="Decreased interaction with SETD3." evidence="34">
    <original>D</original>
    <variation>A</variation>
    <location>
        <position position="81"/>
    </location>
</feature>
<feature type="mutagenesis site" description="Decreased interaction with SETD3." evidence="34">
    <original>M</original>
    <variation>A</variation>
    <location>
        <position position="82"/>
    </location>
</feature>
<feature type="sequence conflict" description="In Ref. 6; AAH16045." evidence="43" ref="6">
    <original>A</original>
    <variation>P</variation>
    <location>
        <position position="97"/>
    </location>
</feature>
<feature type="sequence conflict" description="In Ref. 6; AAH12854." evidence="43" ref="6">
    <original>R</original>
    <variation>L</variation>
    <location>
        <position position="116"/>
    </location>
</feature>
<feature type="turn" evidence="69">
    <location>
        <begin position="3"/>
        <end position="5"/>
    </location>
</feature>
<feature type="strand" evidence="70">
    <location>
        <begin position="8"/>
        <end position="12"/>
    </location>
</feature>
<feature type="strand" evidence="70">
    <location>
        <begin position="14"/>
        <end position="21"/>
    </location>
</feature>
<feature type="strand" evidence="68">
    <location>
        <begin position="24"/>
        <end position="26"/>
    </location>
</feature>
<feature type="strand" evidence="70">
    <location>
        <begin position="28"/>
        <end position="32"/>
    </location>
</feature>
<feature type="strand" evidence="70">
    <location>
        <begin position="35"/>
        <end position="38"/>
    </location>
</feature>
<feature type="strand" evidence="70">
    <location>
        <begin position="40"/>
        <end position="42"/>
    </location>
</feature>
<feature type="strand" evidence="69">
    <location>
        <begin position="44"/>
        <end position="47"/>
    </location>
</feature>
<feature type="strand" evidence="72">
    <location>
        <begin position="51"/>
        <end position="54"/>
    </location>
</feature>
<feature type="helix" evidence="70">
    <location>
        <begin position="56"/>
        <end position="60"/>
    </location>
</feature>
<feature type="helix" evidence="70">
    <location>
        <begin position="62"/>
        <end position="64"/>
    </location>
</feature>
<feature type="strand" evidence="65">
    <location>
        <begin position="68"/>
        <end position="70"/>
    </location>
</feature>
<feature type="strand" evidence="70">
    <location>
        <begin position="75"/>
        <end position="77"/>
    </location>
</feature>
<feature type="turn" evidence="66">
    <location>
        <begin position="81"/>
        <end position="83"/>
    </location>
</feature>
<feature type="turn" evidence="70">
    <location>
        <begin position="92"/>
        <end position="94"/>
    </location>
</feature>
<feature type="turn" evidence="71">
    <location>
        <begin position="98"/>
        <end position="100"/>
    </location>
</feature>
<feature type="strand" evidence="70">
    <location>
        <begin position="103"/>
        <end position="107"/>
    </location>
</feature>
<feature type="helix" evidence="70">
    <location>
        <begin position="113"/>
        <end position="125"/>
    </location>
</feature>
<feature type="strand" evidence="70">
    <location>
        <begin position="130"/>
        <end position="136"/>
    </location>
</feature>
<feature type="helix" evidence="70">
    <location>
        <begin position="137"/>
        <end position="144"/>
    </location>
</feature>
<feature type="strand" evidence="70">
    <location>
        <begin position="148"/>
        <end position="155"/>
    </location>
</feature>
<feature type="strand" evidence="70">
    <location>
        <begin position="160"/>
        <end position="166"/>
    </location>
</feature>
<feature type="helix" evidence="70">
    <location>
        <begin position="172"/>
        <end position="174"/>
    </location>
</feature>
<feature type="strand" evidence="70">
    <location>
        <begin position="176"/>
        <end position="179"/>
    </location>
</feature>
<feature type="helix" evidence="70">
    <location>
        <begin position="182"/>
        <end position="193"/>
    </location>
</feature>
<feature type="helix" evidence="70">
    <location>
        <begin position="194"/>
        <end position="196"/>
    </location>
</feature>
<feature type="helix" evidence="70">
    <location>
        <begin position="203"/>
        <end position="216"/>
    </location>
</feature>
<feature type="helix" evidence="70">
    <location>
        <begin position="223"/>
        <end position="230"/>
    </location>
</feature>
<feature type="turn" evidence="67">
    <location>
        <begin position="231"/>
        <end position="233"/>
    </location>
</feature>
<feature type="helix" evidence="73">
    <location>
        <begin position="234"/>
        <end position="236"/>
    </location>
</feature>
<feature type="strand" evidence="70">
    <location>
        <begin position="238"/>
        <end position="241"/>
    </location>
</feature>
<feature type="strand" evidence="67">
    <location>
        <begin position="243"/>
        <end position="246"/>
    </location>
</feature>
<feature type="strand" evidence="70">
    <location>
        <begin position="247"/>
        <end position="251"/>
    </location>
</feature>
<feature type="helix" evidence="70">
    <location>
        <begin position="253"/>
        <end position="259"/>
    </location>
</feature>
<feature type="turn" evidence="70">
    <location>
        <begin position="260"/>
        <end position="262"/>
    </location>
</feature>
<feature type="helix" evidence="70">
    <location>
        <begin position="264"/>
        <end position="267"/>
    </location>
</feature>
<feature type="helix" evidence="70">
    <location>
        <begin position="274"/>
        <end position="283"/>
    </location>
</feature>
<feature type="helix" evidence="70">
    <location>
        <begin position="287"/>
        <end position="289"/>
    </location>
</feature>
<feature type="helix" evidence="70">
    <location>
        <begin position="290"/>
        <end position="294"/>
    </location>
</feature>
<feature type="strand" evidence="70">
    <location>
        <begin position="297"/>
        <end position="301"/>
    </location>
</feature>
<feature type="helix" evidence="70">
    <location>
        <begin position="302"/>
        <end position="304"/>
    </location>
</feature>
<feature type="helix" evidence="70">
    <location>
        <begin position="309"/>
        <end position="320"/>
    </location>
</feature>
<feature type="strand" evidence="69">
    <location>
        <begin position="323"/>
        <end position="325"/>
    </location>
</feature>
<feature type="helix" evidence="70">
    <location>
        <begin position="335"/>
        <end position="337"/>
    </location>
</feature>
<feature type="helix" evidence="70">
    <location>
        <begin position="338"/>
        <end position="346"/>
    </location>
</feature>
<feature type="helix" evidence="70">
    <location>
        <begin position="350"/>
        <end position="352"/>
    </location>
</feature>
<feature type="turn" evidence="70">
    <location>
        <begin position="353"/>
        <end position="355"/>
    </location>
</feature>
<feature type="strand" evidence="73">
    <location>
        <begin position="356"/>
        <end position="358"/>
    </location>
</feature>
<feature type="helix" evidence="70">
    <location>
        <begin position="359"/>
        <end position="365"/>
    </location>
</feature>
<feature type="helix" evidence="70">
    <location>
        <begin position="366"/>
        <end position="370"/>
    </location>
</feature>
<accession>P60709</accession>
<accession>P02570</accession>
<accession>P70514</accession>
<accession>P99021</accession>
<accession>Q11211</accession>
<accession>Q64316</accession>
<accession>Q75MN2</accession>
<accession>Q96B34</accession>
<accession>Q96HG5</accession>
<comment type="function">
    <text evidence="4 21 26 28 40 41">Actin is a highly conserved protein that polymerizes to produce filaments that form cross-linked networks in the cytoplasm of cells (PubMed:25255767, PubMed:29581253). Actin exists in both monomeric (G-actin) and polymeric (F-actin) forms, both forms playing key functions, such as cell motility and contraction (PubMed:29581253). In addition to their role in the cytoplasmic cytoskeleton, G- and F-actin also localize in the nucleus, and regulate gene transcription and motility and repair of damaged DNA (PubMed:29925947). Plays a role in the assembly of the gamma-tubulin ring complex (gTuRC), which regulates the minus-end nucleation of alpha-beta tubulin heterodimers that grow into microtubule protafilaments (PubMed:39321809, PubMed:38609661). Part of the ACTR1A/ACTB filament around which the dynactin complex is built (By similarity). The dynactin multiprotein complex activates the molecular motor dynein for ultra-processive transport along microtubules (By similarity).</text>
</comment>
<comment type="catalytic activity">
    <reaction evidence="21">
        <text>ATP + H2O = ADP + phosphate + H(+)</text>
        <dbReference type="Rhea" id="RHEA:13065"/>
        <dbReference type="ChEBI" id="CHEBI:15377"/>
        <dbReference type="ChEBI" id="CHEBI:15378"/>
        <dbReference type="ChEBI" id="CHEBI:30616"/>
        <dbReference type="ChEBI" id="CHEBI:43474"/>
        <dbReference type="ChEBI" id="CHEBI:456216"/>
    </reaction>
</comment>
<comment type="subunit">
    <text evidence="1 2 4 5 6 8 9 11 12 13 14 16 17 21 24 40 41">Polymerization of globular actin (G-actin) leads to a structural filament (F-actin) in the form of a two-stranded helix (PubMed:16685646, PubMed:28604741). Each actin can bind to 4 others (PubMed:16685646, PubMed:28604741). Identified in a IGF2BP1-dependent mRNP granule complex containing untranslated mRNAs (PubMed:17289661). Component of the BAF complex, which includes at least actin (ACTB), ARID1A, ARID1B/BAF250, SMARCA2, SMARCA4/BRG1, ACTL6A/BAF53, ACTL6B/BAF53B, SMARCE1/BAF57 SMARCC1/BAF155, SMARCC2/BAF170, SMARCB1/SNF5/INI1, and one or more of SMARCD1/BAF60A, SMARCD2/BAF60B, or SMARCD3/BAF60C (PubMed:18765789). In muscle cells, the BAF complex also contains DPF3 (PubMed:18765789). Found in a complex with XPO6, Ran, ACTB and PFN1 (PubMed:14592989). Interacts with PFN1 (PubMed:10411937, PubMed:25255767). Interacts with XPO6 and EMD (PubMed:15328537). Interacts with ERBB2 (PubMed:21555369). Interacts with GCSAM (PubMed:17823310). Interacts with TBC1D21 (By similarity). Interacts with CPNE1 (via VWFA domain) and CPNE4 (via VWFA domain) (By similarity). Interacts with DHX9 (via C-terminus); this interaction is direct and mediates the attachment to nuclear ribonucleoprotein complexes (PubMed:11687588). Interacts with FAM107A (PubMed:21969592, PubMed:28604741). Associates with the gamma-tubulin ring complex (gTuRC) consisting of TUBGCP2, TUBGCP3, TUBGCP4, TUBGCP5 and TUBGCP6 and gamma-tubulin TUBG1 or TUBG2; within the complex, interacts with TUBGCP3 and TUBGCP6 to form a luminal bridge with MZT1 that stabilizes the initial structure during complex assembly (PubMed:39321809, PubMed:38609661). Part of the ACTR1A/ACTB filament around which the dynactin complex is built (By similarity). The filament contains 8 copies of ACTR1A and 1 ACTB (By similarity). Interacts with TPRN which forms ring-like structures in the stereocilium taper region; the interaction may stabilize stereocilia in inner ear hair cells (By similarity). Interacts with AMOTL2 (via N-terminus), the interaction facilitates binding of cell junction complexes to actin fibers in endothelial cells (By similarity).</text>
</comment>
<comment type="interaction">
    <interactant intactId="EBI-353944">
        <id>P60709</id>
    </interactant>
    <interactant intactId="EBI-353944">
        <id>P60709</id>
        <label>ACTB</label>
    </interactant>
    <organismsDiffer>false</organismsDiffer>
    <experiments>16</experiments>
</comment>
<comment type="interaction">
    <interactant intactId="EBI-353944">
        <id>P60709</id>
    </interactant>
    <interactant intactId="EBI-351292">
        <id>P63261</id>
        <label>ACTG1</label>
    </interactant>
    <organismsDiffer>false</organismsDiffer>
    <experiments>16</experiments>
</comment>
<comment type="interaction">
    <interactant intactId="EBI-353944">
        <id>P60709</id>
    </interactant>
    <interactant intactId="EBI-77613">
        <id>P05067</id>
        <label>APP</label>
    </interactant>
    <organismsDiffer>false</organismsDiffer>
    <experiments>8</experiments>
</comment>
<comment type="interaction">
    <interactant intactId="EBI-353944">
        <id>P60709</id>
    </interactant>
    <interactant intactId="EBI-525456">
        <id>Q9UQB8</id>
        <label>BAIAP2</label>
    </interactant>
    <organismsDiffer>false</organismsDiffer>
    <experiments>2</experiments>
</comment>
<comment type="interaction">
    <interactant intactId="EBI-353944">
        <id>P60709</id>
    </interactant>
    <interactant intactId="EBI-1051165">
        <id>P40123</id>
        <label>CAP2</label>
    </interactant>
    <organismsDiffer>false</organismsDiffer>
    <experiments>9</experiments>
</comment>
<comment type="interaction">
    <interactant intactId="EBI-353944">
        <id>P60709</id>
    </interactant>
    <interactant intactId="EBI-295634">
        <id>Q16543</id>
        <label>CDC37</label>
    </interactant>
    <organismsDiffer>false</organismsDiffer>
    <experiments>3</experiments>
</comment>
<comment type="interaction">
    <interactant intactId="EBI-353944">
        <id>P60709</id>
    </interactant>
    <interactant intactId="EBI-352733">
        <id>P23528</id>
        <label>CFL1</label>
    </interactant>
    <organismsDiffer>false</organismsDiffer>
    <experiments>11</experiments>
</comment>
<comment type="interaction">
    <interactant intactId="EBI-353944">
        <id>P60709</id>
    </interactant>
    <interactant intactId="EBI-10201319">
        <id>Q549N0</id>
        <label>CFL2</label>
    </interactant>
    <organismsDiffer>false</organismsDiffer>
    <experiments>3</experiments>
</comment>
<comment type="interaction">
    <interactant intactId="EBI-353944">
        <id>P60709</id>
    </interactant>
    <interactant intactId="EBI-351218">
        <id>Q9Y281</id>
        <label>CFL2</label>
    </interactant>
    <organismsDiffer>false</organismsDiffer>
    <experiments>11</experiments>
</comment>
<comment type="interaction">
    <interactant intactId="EBI-353944">
        <id>P60709</id>
    </interactant>
    <interactant intactId="EBI-349854">
        <id>P13569</id>
        <label>CFTR</label>
    </interactant>
    <organismsDiffer>false</organismsDiffer>
    <experiments>6</experiments>
</comment>
<comment type="interaction">
    <interactant intactId="EBI-353944">
        <id>P60709</id>
    </interactant>
    <interactant intactId="EBI-745191">
        <id>P60981</id>
        <label>DSTN</label>
    </interactant>
    <organismsDiffer>false</organismsDiffer>
    <experiments>10</experiments>
</comment>
<comment type="interaction">
    <interactant intactId="EBI-353944">
        <id>P60709</id>
    </interactant>
    <interactant intactId="EBI-8654968">
        <id>Q8WTR2</id>
        <label>DUSP19</label>
    </interactant>
    <organismsDiffer>false</organismsDiffer>
    <experiments>4</experiments>
</comment>
<comment type="interaction">
    <interactant intactId="EBI-353944">
        <id>P60709</id>
    </interactant>
    <interactant intactId="EBI-2339219">
        <id>Q08426</id>
        <label>EHHADH</label>
    </interactant>
    <organismsDiffer>false</organismsDiffer>
    <experiments>4</experiments>
</comment>
<comment type="interaction">
    <interactant intactId="EBI-353944">
        <id>P60709</id>
    </interactant>
    <interactant intactId="EBI-489887">
        <id>P50402</id>
        <label>EMD</label>
    </interactant>
    <organismsDiffer>false</organismsDiffer>
    <experiments>2</experiments>
</comment>
<comment type="interaction">
    <interactant intactId="EBI-353944">
        <id>P60709</id>
    </interactant>
    <interactant intactId="EBI-641062">
        <id>P04626</id>
        <label>ERBB2</label>
    </interactant>
    <organismsDiffer>false</organismsDiffer>
    <experiments>10</experiments>
</comment>
<comment type="interaction">
    <interactant intactId="EBI-353944">
        <id>P60709</id>
    </interactant>
    <interactant intactId="EBI-6264551">
        <id>Q8TCJ0-2</id>
        <label>FBXO25</label>
    </interactant>
    <organismsDiffer>false</organismsDiffer>
    <experiments>3</experiments>
</comment>
<comment type="interaction">
    <interactant intactId="EBI-353944">
        <id>P60709</id>
    </interactant>
    <interactant intactId="EBI-351896">
        <id>P11142</id>
        <label>HSPA8</label>
    </interactant>
    <organismsDiffer>false</organismsDiffer>
    <experiments>2</experiments>
</comment>
<comment type="interaction">
    <interactant intactId="EBI-353944">
        <id>P60709</id>
    </interactant>
    <interactant intactId="EBI-2867394">
        <id>P83110</id>
        <label>HTRA3</label>
    </interactant>
    <organismsDiffer>false</organismsDiffer>
    <experiments>5</experiments>
</comment>
<comment type="interaction">
    <interactant intactId="EBI-353944">
        <id>P60709</id>
    </interactant>
    <interactant intactId="EBI-466029">
        <id>P42858</id>
        <label>HTT</label>
    </interactant>
    <organismsDiffer>false</organismsDiffer>
    <experiments>3</experiments>
</comment>
<comment type="interaction">
    <interactant intactId="EBI-353944">
        <id>P60709</id>
    </interactant>
    <interactant intactId="EBI-1642165">
        <id>O14950</id>
        <label>MYL12B</label>
    </interactant>
    <organismsDiffer>false</organismsDiffer>
    <experiments>3</experiments>
</comment>
<comment type="interaction">
    <interactant intactId="EBI-353944">
        <id>P60709</id>
    </interactant>
    <interactant intactId="EBI-395044">
        <id>P14598</id>
        <label>NCF1</label>
    </interactant>
    <organismsDiffer>false</organismsDiffer>
    <experiments>3</experiments>
</comment>
<comment type="interaction">
    <interactant intactId="EBI-353944">
        <id>P60709</id>
    </interactant>
    <interactant intactId="EBI-1391623">
        <id>P29474</id>
        <label>NOS3</label>
    </interactant>
    <organismsDiffer>false</organismsDiffer>
    <experiments>3</experiments>
</comment>
<comment type="interaction">
    <interactant intactId="EBI-353944">
        <id>P60709</id>
    </interactant>
    <interactant intactId="EBI-2947053">
        <id>Q92636</id>
        <label>NSMAF</label>
    </interactant>
    <organismsDiffer>false</organismsDiffer>
    <experiments>2</experiments>
</comment>
<comment type="interaction">
    <interactant intactId="EBI-353944">
        <id>P60709</id>
    </interactant>
    <interactant intactId="EBI-741158">
        <id>Q96HA8</id>
        <label>NTAQ1</label>
    </interactant>
    <organismsDiffer>false</organismsDiffer>
    <experiments>6</experiments>
</comment>
<comment type="interaction">
    <interactant intactId="EBI-353944">
        <id>P60709</id>
    </interactant>
    <interactant intactId="EBI-713780">
        <id>P07737</id>
        <label>PFN1</label>
    </interactant>
    <organismsDiffer>false</organismsDiffer>
    <experiments>3</experiments>
</comment>
<comment type="interaction">
    <interactant intactId="EBI-353944">
        <id>P60709</id>
    </interactant>
    <interactant intactId="EBI-2340927">
        <id>P78317</id>
        <label>RNF4</label>
    </interactant>
    <organismsDiffer>false</organismsDiffer>
    <experiments>3</experiments>
</comment>
<comment type="interaction">
    <interactant intactId="EBI-353944">
        <id>P60709</id>
    </interactant>
    <interactant intactId="EBI-1056740">
        <id>P37802</id>
        <label>TAGLN2</label>
    </interactant>
    <organismsDiffer>false</organismsDiffer>
    <experiments>3</experiments>
</comment>
<comment type="interaction">
    <interactant intactId="EBI-353944">
        <id>P60709</id>
    </interactant>
    <interactant intactId="EBI-717399">
        <id>Q9BSI4</id>
        <label>TINF2</label>
    </interactant>
    <organismsDiffer>false</organismsDiffer>
    <experiments>2</experiments>
</comment>
<comment type="interaction">
    <interactant intactId="EBI-353944">
        <id>P60709</id>
    </interactant>
    <interactant intactId="EBI-1783169">
        <id>P13693</id>
        <label>TPT1</label>
    </interactant>
    <organismsDiffer>false</organismsDiffer>
    <experiments>4</experiments>
</comment>
<comment type="interaction">
    <interactant intactId="EBI-353944">
        <id>P60709</id>
    </interactant>
    <interactant intactId="EBI-10180829">
        <id>Q7KZS0</id>
        <label>UBE2I</label>
    </interactant>
    <organismsDiffer>false</organismsDiffer>
    <experiments>3</experiments>
</comment>
<comment type="interaction">
    <interactant intactId="EBI-353944">
        <id>P60709</id>
    </interactant>
    <interactant intactId="EBI-11141397">
        <id>Q9UBQ0-2</id>
        <label>VPS29</label>
    </interactant>
    <organismsDiffer>false</organismsDiffer>
    <experiments>3</experiments>
</comment>
<comment type="interaction">
    <interactant intactId="EBI-353944">
        <id>P60709</id>
    </interactant>
    <interactant intactId="EBI-351917">
        <id>O75083</id>
        <label>WDR1</label>
    </interactant>
    <organismsDiffer>false</organismsDiffer>
    <experiments>2</experiments>
</comment>
<comment type="interaction">
    <interactant intactId="EBI-353944">
        <id>P60709</id>
    </interactant>
    <interactant intactId="EBI-347088">
        <id>P63104</id>
        <label>YWHAZ</label>
    </interactant>
    <organismsDiffer>false</organismsDiffer>
    <experiments>3</experiments>
</comment>
<comment type="interaction">
    <interactant intactId="EBI-353944">
        <id>P60709</id>
    </interactant>
    <interactant intactId="EBI-916155">
        <id>P08413</id>
        <label>Camk2b</label>
    </interactant>
    <organismsDiffer>true</organismsDiffer>
    <experiments>4</experiments>
</comment>
<comment type="interaction">
    <interactant intactId="EBI-353944">
        <id>P60709</id>
    </interactant>
    <interactant intactId="EBI-8291665">
        <id>Q8K4J6</id>
        <label>Mrtfa</label>
    </interactant>
    <organismsDiffer>true</organismsDiffer>
    <experiments>3</experiments>
</comment>
<comment type="subcellular location">
    <subcellularLocation>
        <location evidence="6 12">Cytoplasm</location>
        <location evidence="6 12">Cytoskeleton</location>
    </subcellularLocation>
    <subcellularLocation>
        <location evidence="6 28">Nucleus</location>
    </subcellularLocation>
    <text evidence="12">Localized in cytoplasmic mRNP granules containing untranslated mRNAs.</text>
</comment>
<comment type="PTM">
    <text evidence="10">ISGylated.</text>
</comment>
<comment type="PTM">
    <text evidence="25">Oxidation of Met-44 and Met-47 by MICALs (MICAL1, MICAL2 or MICAL3) to form methionine sulfoxide promotes actin filament depolymerization. MICAL1 and MICAL2 produce the (R)-S-oxide form. The (R)-S-oxide form is reverted by MSRB1 and MSRB2, which promote actin repolymerization.</text>
</comment>
<comment type="PTM">
    <text evidence="19">Monomethylation at Lys-84 (K84me1) regulates actin-myosin interaction and actomyosin-dependent processes (PubMed:23673617). Demethylation by ALKBH4 is required for maintaining actomyosin dynamics supporting normal cleavage furrow ingression during cytokinesis and cell migration (PubMed:23673617).</text>
</comment>
<comment type="PTM">
    <text evidence="2 31 32 34 35">Methylated at His-73 by SETD3 (PubMed:30526847, PubMed:30626964, PubMed:30785395, PubMed:31388018). Methylation at His-73 is required for smooth muscle contraction of the laboring uterus during delivery (By similarity).</text>
</comment>
<comment type="PTM">
    <molecule>Actin, cytoplasmic 1</molecule>
    <text evidence="39">N-terminal cleavage of acetylated methionine of immature cytoplasmic actin by ACTMAP.</text>
</comment>
<comment type="PTM">
    <molecule>Actin, cytoplasmic 1, N-terminally processed</molecule>
    <text evidence="26">N-terminal acetylation by NAA80 affects actin filament depolymerization and elongation, including elongation driven by formins (PubMed:29581253). In contrast, filament nucleation by the Arp2/3 complex is not affected (PubMed:29581253).</text>
</comment>
<comment type="PTM">
    <text evidence="44 45">(Microbial infection) Monomeric actin is cross-linked by V.cholerae toxins RtxA and VgrG1 in case of infection: bacterial toxins mediate the cross-link between Lys-50 of one monomer and Glu-270 of another actin monomer, resulting in formation of highly toxic actin oligomers that cause cell rounding (PubMed:19015515). The toxin can be highly efficient at very low concentrations by acting on formin homology family proteins: toxic actin oligomers bind with high affinity to formins and adversely affect both nucleation and elongation abilities of formins, causing their potent inhibition in both profilin-dependent and independent manners (PubMed:26228148).</text>
</comment>
<comment type="disease" evidence="11 21 23 27 38">
    <disease id="DI-00412">
        <name>Dystonia-deafness syndrome 1</name>
        <acronym>DDS1</acronym>
        <description>An autosomal dominant form of dystonia with juvenile onset, associated with congenital or childhood-onset sensorineural deafness. Dystonia is defined by the presence of sustained involuntary muscle contraction, often leading to abnormal postures. Some DDS1 patients have dysmorphic features, skeletal anomalies, and/or mild developmental delay with impaired intellectual development.</description>
        <dbReference type="MIM" id="607371"/>
    </disease>
    <text>The disease is caused by variants affecting the gene represented in this entry.</text>
</comment>
<comment type="disease" evidence="18 33">
    <disease id="DI-03416">
        <name>Baraitser-Winter syndrome 1</name>
        <acronym>BRWS1</acronym>
        <description>A rare developmental disorder characterized by the combination of congenital ptosis, high-arched eyebrows, hypertelorism, ocular colobomata, and a brain malformation consisting of anterior-predominant lissencephaly. Other typical features include postnatal short stature and microcephaly, intellectual disability, seizures, and hearing loss.</description>
        <dbReference type="MIM" id="243310"/>
    </disease>
    <text>The disease is caused by variants affecting the gene represented in this entry.</text>
</comment>
<comment type="disease" evidence="5 21 30 33">
    <disease id="DI-06744">
        <name>Thrombocytopenia 8, with dysmorphic features and developmental delay</name>
        <acronym>THC8</acronym>
        <description>A form of thrombocytopenia, a hematologic disorder defined by a decrease in the number of platelets in circulating blood, resulting in the potential for increased bleeding and decreased ability for clotting. THC8 is an autosomal dominant form characterized by early-childhood onset of thrombocytopenia with platelet anisotropy. Affected individuals also have dysmorphic facial features and variable developmental delay with speech delay and mildly impaired intellectual development.</description>
        <dbReference type="MIM" id="620475"/>
    </disease>
    <text>The disease is caused by variants affecting the gene represented in this entry.</text>
</comment>
<comment type="disease" evidence="22">
    <disease id="DI-06747">
        <name>Becker nevus syndrome</name>
        <acronym>BNS</acronym>
        <description>A syndrome characterized by the association of Becker nevi with musculoskeletal abnormalities, unilateral breast hypoplasia, intellectual disability, developmental delay, and cardiomyopathy. Becker nevus is a cutaneous hamartoma that appears in childhood as a unilateral tan patch and increases in thickness, pigmentation, and hair growth during adolescence. Histologically, epidermal acanthosis is accompanied by irregularly dispersed ectopic smooth muscle bundles and increased terminal hair follicles. Most cases are sporadic.</description>
        <dbReference type="MIM" id="604919"/>
    </disease>
    <text>The disease is caused by variants affecting the gene represented in this entry.</text>
</comment>
<comment type="disease" evidence="36">
    <disease id="DI-06743">
        <name>Congenital smooth muscle hamartoma, with or without hemihypertrophy</name>
        <acronym>CSMH</acronym>
        <description>A benign skin lesion that usually presents as an indurated, slightly pigmented or flesh-colored plaque with perifollicular papules or coarse hair. Histopathologically, there is excessive proliferation of ectopic smooth muscle within the dermis. Hair follicles are normal in number and hyperkeratosis, acanthosis and hyperpigmentation of the basal cell layer can sometimes be seen. Rarely, CSMH is associated with hemihypertrophy.</description>
        <dbReference type="MIM" id="620470"/>
    </disease>
    <text>The disease is caused by variants affecting the gene represented in this entry.</text>
</comment>
<comment type="miscellaneous">
    <text evidence="43">In vertebrates 3 main groups of actin isoforms, alpha, beta and gamma have been identified. The alpha actins are found in muscle tissues and are a major constituent of the contractile apparatus. The beta and gamma actins coexist in most cell types as components of the cytoskeleton and as mediators of internal cell motility.</text>
</comment>
<comment type="similarity">
    <text evidence="43">Belongs to the actin family.</text>
</comment>
<comment type="caution">
    <text evidence="15 20">Was originally thought to be part of the MLL5-L complex, at least composed of KMT2E, STK38, PPP1CA, PPP1CB, PPP1CC, HCFC1, ACTB and OGT (PubMed:19377461). However, the corresponding article has been retracted (PubMed:24336203).</text>
</comment>
<comment type="online information" name="Atlas of Genetics and Cytogenetics in Oncology and Haematology">
    <link uri="https://atlasgeneticsoncology.org/gene/42959/ACTB"/>
</comment>
<comment type="online information" name="Mendelian genes actin, beta (ACTB)">
    <link uri="https://databases.lovd.nl/shared/genes/ACTB"/>
    <text>Leiden Open Variation Database (LOVD)</text>
</comment>
<comment type="online information" name="Protein Spotlight">
    <link uri="https://www.proteinspotlight.org/back_issues/208/"/>
    <text>On mar and motion - Issue 208 of November 2018</text>
</comment>